<keyword id="KW-0002">3D-structure</keyword>
<keyword id="KW-0007">Acetylation</keyword>
<keyword id="KW-0025">Alternative splicing</keyword>
<keyword id="KW-0090">Biological rhythms</keyword>
<keyword id="KW-0131">Cell cycle</keyword>
<keyword id="KW-1003">Cell membrane</keyword>
<keyword id="KW-0137">Centromere</keyword>
<keyword id="KW-0156">Chromatin regulator</keyword>
<keyword id="KW-0158">Chromosome</keyword>
<keyword id="KW-0968">Cytoplasmic vesicle</keyword>
<keyword id="KW-0221">Differentiation</keyword>
<keyword id="KW-0945">Host-virus interaction</keyword>
<keyword id="KW-0472">Membrane</keyword>
<keyword id="KW-0479">Metal-binding</keyword>
<keyword id="KW-0489">Methyltransferase</keyword>
<keyword id="KW-0539">Nucleus</keyword>
<keyword id="KW-0597">Phosphoprotein</keyword>
<keyword id="KW-1267">Proteomics identification</keyword>
<keyword id="KW-1185">Reference proteome</keyword>
<keyword id="KW-0678">Repressor</keyword>
<keyword id="KW-0698">rRNA processing</keyword>
<keyword id="KW-0949">S-adenosyl-L-methionine</keyword>
<keyword id="KW-0804">Transcription</keyword>
<keyword id="KW-0805">Transcription regulation</keyword>
<keyword id="KW-0808">Transferase</keyword>
<keyword id="KW-0832">Ubl conjugation</keyword>
<keyword id="KW-0862">Zinc</keyword>
<dbReference type="EC" id="2.1.1.355" evidence="10 27"/>
<dbReference type="EMBL" id="AF019968">
    <property type="protein sequence ID" value="AAB92224.1"/>
    <property type="molecule type" value="mRNA"/>
</dbReference>
<dbReference type="EMBL" id="CR541746">
    <property type="protein sequence ID" value="CAG46546.1"/>
    <property type="molecule type" value="mRNA"/>
</dbReference>
<dbReference type="EMBL" id="AK223071">
    <property type="protein sequence ID" value="BAD96791.1"/>
    <property type="molecule type" value="mRNA"/>
</dbReference>
<dbReference type="EMBL" id="AK299900">
    <property type="protein sequence ID" value="BAG61742.1"/>
    <property type="molecule type" value="mRNA"/>
</dbReference>
<dbReference type="EMBL" id="AK312547">
    <property type="protein sequence ID" value="BAG35445.1"/>
    <property type="molecule type" value="mRNA"/>
</dbReference>
<dbReference type="EMBL" id="AF196970">
    <property type="status" value="NOT_ANNOTATED_CDS"/>
    <property type="molecule type" value="Genomic_DNA"/>
</dbReference>
<dbReference type="EMBL" id="CH471224">
    <property type="protein sequence ID" value="EAW50756.1"/>
    <property type="molecule type" value="Genomic_DNA"/>
</dbReference>
<dbReference type="EMBL" id="CH471224">
    <property type="protein sequence ID" value="EAW50757.1"/>
    <property type="molecule type" value="Genomic_DNA"/>
</dbReference>
<dbReference type="EMBL" id="BC006238">
    <property type="protein sequence ID" value="AAH06238.1"/>
    <property type="molecule type" value="mRNA"/>
</dbReference>
<dbReference type="CCDS" id="CCDS14304.1">
    <molecule id="O43463-1"/>
</dbReference>
<dbReference type="CCDS" id="CCDS65252.1">
    <molecule id="O43463-2"/>
</dbReference>
<dbReference type="RefSeq" id="NP_001269095.1">
    <molecule id="O43463-2"/>
    <property type="nucleotide sequence ID" value="NM_001282166.2"/>
</dbReference>
<dbReference type="RefSeq" id="NP_003164.1">
    <molecule id="O43463-1"/>
    <property type="nucleotide sequence ID" value="NM_003173.4"/>
</dbReference>
<dbReference type="PDB" id="3MTS">
    <property type="method" value="X-ray"/>
    <property type="resolution" value="2.20 A"/>
    <property type="chains" value="A/B/C=44-106"/>
</dbReference>
<dbReference type="PDBsum" id="3MTS"/>
<dbReference type="SMR" id="O43463"/>
<dbReference type="BioGRID" id="112706">
    <property type="interactions" value="239"/>
</dbReference>
<dbReference type="ComplexPortal" id="CPX-467">
    <property type="entry name" value="eNoSc complex"/>
</dbReference>
<dbReference type="CORUM" id="O43463"/>
<dbReference type="DIP" id="DIP-32589N"/>
<dbReference type="FunCoup" id="O43463">
    <property type="interactions" value="1678"/>
</dbReference>
<dbReference type="IntAct" id="O43463">
    <property type="interactions" value="169"/>
</dbReference>
<dbReference type="MINT" id="O43463"/>
<dbReference type="STRING" id="9606.ENSP00000337976"/>
<dbReference type="BindingDB" id="O43463"/>
<dbReference type="ChEMBL" id="CHEMBL1795118"/>
<dbReference type="GuidetoPHARMACOLOGY" id="2715"/>
<dbReference type="iPTMnet" id="O43463"/>
<dbReference type="PhosphoSitePlus" id="O43463"/>
<dbReference type="SwissPalm" id="O43463"/>
<dbReference type="BioMuta" id="SUV39H1"/>
<dbReference type="jPOST" id="O43463"/>
<dbReference type="MassIVE" id="O43463"/>
<dbReference type="PaxDb" id="9606-ENSP00000337976"/>
<dbReference type="PeptideAtlas" id="O43463"/>
<dbReference type="ProteomicsDB" id="48957">
    <molecule id="O43463-1"/>
</dbReference>
<dbReference type="ProteomicsDB" id="5048"/>
<dbReference type="Pumba" id="O43463"/>
<dbReference type="Antibodypedia" id="11710">
    <property type="antibodies" value="406 antibodies from 39 providers"/>
</dbReference>
<dbReference type="CPTC" id="O43463">
    <property type="antibodies" value="1 antibody"/>
</dbReference>
<dbReference type="DNASU" id="6839"/>
<dbReference type="Ensembl" id="ENST00000337852.10">
    <molecule id="O43463-2"/>
    <property type="protein sequence ID" value="ENSP00000337976.6"/>
    <property type="gene ID" value="ENSG00000101945.17"/>
</dbReference>
<dbReference type="Ensembl" id="ENST00000376687.4">
    <molecule id="O43463-1"/>
    <property type="protein sequence ID" value="ENSP00000365877.4"/>
    <property type="gene ID" value="ENSG00000101945.17"/>
</dbReference>
<dbReference type="GeneID" id="6839"/>
<dbReference type="KEGG" id="hsa:6839"/>
<dbReference type="MANE-Select" id="ENST00000376687.4">
    <property type="protein sequence ID" value="ENSP00000365877.4"/>
    <property type="RefSeq nucleotide sequence ID" value="NM_003173.4"/>
    <property type="RefSeq protein sequence ID" value="NP_003164.1"/>
</dbReference>
<dbReference type="UCSC" id="uc004dkn.5">
    <molecule id="O43463-1"/>
    <property type="organism name" value="human"/>
</dbReference>
<dbReference type="AGR" id="HGNC:11479"/>
<dbReference type="CTD" id="6839"/>
<dbReference type="DisGeNET" id="6839"/>
<dbReference type="GeneCards" id="SUV39H1"/>
<dbReference type="HGNC" id="HGNC:11479">
    <property type="gene designation" value="SUV39H1"/>
</dbReference>
<dbReference type="HPA" id="ENSG00000101945">
    <property type="expression patterns" value="Low tissue specificity"/>
</dbReference>
<dbReference type="MIM" id="300254">
    <property type="type" value="gene"/>
</dbReference>
<dbReference type="neXtProt" id="NX_O43463"/>
<dbReference type="OpenTargets" id="ENSG00000101945"/>
<dbReference type="PharmGKB" id="PA36264"/>
<dbReference type="VEuPathDB" id="HostDB:ENSG00000101945"/>
<dbReference type="eggNOG" id="KOG1082">
    <property type="taxonomic scope" value="Eukaryota"/>
</dbReference>
<dbReference type="GeneTree" id="ENSGT00940000160063"/>
<dbReference type="HOGENOM" id="CLU_020840_8_0_1"/>
<dbReference type="InParanoid" id="O43463"/>
<dbReference type="OMA" id="HHGNISH"/>
<dbReference type="OrthoDB" id="308383at2759"/>
<dbReference type="PAN-GO" id="O43463">
    <property type="GO annotations" value="3 GO annotations based on evolutionary models"/>
</dbReference>
<dbReference type="PhylomeDB" id="O43463"/>
<dbReference type="TreeFam" id="TF106452"/>
<dbReference type="BioCyc" id="MetaCyc:HS02321-MONOMER"/>
<dbReference type="BRENDA" id="2.1.1.355">
    <property type="organism ID" value="2681"/>
</dbReference>
<dbReference type="PathwayCommons" id="O43463"/>
<dbReference type="Reactome" id="R-HSA-3214841">
    <property type="pathway name" value="PKMTs methylate histone lysines"/>
</dbReference>
<dbReference type="Reactome" id="R-HSA-427359">
    <property type="pathway name" value="SIRT1 negatively regulates rRNA expression"/>
</dbReference>
<dbReference type="SignaLink" id="O43463"/>
<dbReference type="SIGNOR" id="O43463"/>
<dbReference type="BioGRID-ORCS" id="6839">
    <property type="hits" value="27 hits in 800 CRISPR screens"/>
</dbReference>
<dbReference type="CD-CODE" id="76F9ED9B">
    <property type="entry name" value="Synthetic Condensate 000325"/>
</dbReference>
<dbReference type="CD-CODE" id="AF287C13">
    <property type="entry name" value="Synthetic Condensate 000326"/>
</dbReference>
<dbReference type="CD-CODE" id="F5834E66">
    <property type="entry name" value="Synthetic Condensate 000310"/>
</dbReference>
<dbReference type="ChiTaRS" id="SUV39H1">
    <property type="organism name" value="human"/>
</dbReference>
<dbReference type="EvolutionaryTrace" id="O43463"/>
<dbReference type="GeneWiki" id="SUV39H1"/>
<dbReference type="GenomeRNAi" id="6839"/>
<dbReference type="Pharos" id="O43463">
    <property type="development level" value="Tchem"/>
</dbReference>
<dbReference type="PRO" id="PR:O43463"/>
<dbReference type="Proteomes" id="UP000005640">
    <property type="component" value="Chromosome X"/>
</dbReference>
<dbReference type="RNAct" id="O43463">
    <property type="molecule type" value="protein"/>
</dbReference>
<dbReference type="Bgee" id="ENSG00000101945">
    <property type="expression patterns" value="Expressed in primordial germ cell in gonad and 137 other cell types or tissues"/>
</dbReference>
<dbReference type="GO" id="GO:0005677">
    <property type="term" value="C:chromatin silencing complex"/>
    <property type="evidence" value="ECO:0000314"/>
    <property type="project" value="UniProtKB"/>
</dbReference>
<dbReference type="GO" id="GO:0000775">
    <property type="term" value="C:chromosome, centromeric region"/>
    <property type="evidence" value="ECO:0007669"/>
    <property type="project" value="UniProtKB-SubCell"/>
</dbReference>
<dbReference type="GO" id="GO:0000794">
    <property type="term" value="C:condensed nuclear chromosome"/>
    <property type="evidence" value="ECO:0000304"/>
    <property type="project" value="ProtInc"/>
</dbReference>
<dbReference type="GO" id="GO:0031410">
    <property type="term" value="C:cytoplasmic vesicle"/>
    <property type="evidence" value="ECO:0007669"/>
    <property type="project" value="UniProtKB-KW"/>
</dbReference>
<dbReference type="GO" id="GO:0061773">
    <property type="term" value="C:eNoSc complex"/>
    <property type="evidence" value="ECO:0000353"/>
    <property type="project" value="ComplexPortal"/>
</dbReference>
<dbReference type="GO" id="GO:0000792">
    <property type="term" value="C:heterochromatin"/>
    <property type="evidence" value="ECO:0000314"/>
    <property type="project" value="UniProtKB"/>
</dbReference>
<dbReference type="GO" id="GO:0005652">
    <property type="term" value="C:nuclear lamina"/>
    <property type="evidence" value="ECO:0007669"/>
    <property type="project" value="UniProtKB-SubCell"/>
</dbReference>
<dbReference type="GO" id="GO:0005730">
    <property type="term" value="C:nucleolus"/>
    <property type="evidence" value="ECO:0000314"/>
    <property type="project" value="ComplexPortal"/>
</dbReference>
<dbReference type="GO" id="GO:0005654">
    <property type="term" value="C:nucleoplasm"/>
    <property type="evidence" value="ECO:0000304"/>
    <property type="project" value="Reactome"/>
</dbReference>
<dbReference type="GO" id="GO:0005634">
    <property type="term" value="C:nucleus"/>
    <property type="evidence" value="ECO:0000314"/>
    <property type="project" value="UniProtKB"/>
</dbReference>
<dbReference type="GO" id="GO:0005886">
    <property type="term" value="C:plasma membrane"/>
    <property type="evidence" value="ECO:0007669"/>
    <property type="project" value="UniProtKB-SubCell"/>
</dbReference>
<dbReference type="GO" id="GO:0033553">
    <property type="term" value="C:rDNA heterochromatin"/>
    <property type="evidence" value="ECO:0000314"/>
    <property type="project" value="UniProtKB"/>
</dbReference>
<dbReference type="GO" id="GO:0003682">
    <property type="term" value="F:chromatin binding"/>
    <property type="evidence" value="ECO:0000304"/>
    <property type="project" value="ProtInc"/>
</dbReference>
<dbReference type="GO" id="GO:0140938">
    <property type="term" value="F:histone H3 methyltransferase activity"/>
    <property type="evidence" value="ECO:0000304"/>
    <property type="project" value="Reactome"/>
</dbReference>
<dbReference type="GO" id="GO:0046974">
    <property type="term" value="F:histone H3K9 methyltransferase activity"/>
    <property type="evidence" value="ECO:0000314"/>
    <property type="project" value="UniProtKB"/>
</dbReference>
<dbReference type="GO" id="GO:0140949">
    <property type="term" value="F:histone H3K9 trimethyltransferase activity"/>
    <property type="evidence" value="ECO:0000314"/>
    <property type="project" value="UniProt"/>
</dbReference>
<dbReference type="GO" id="GO:0140947">
    <property type="term" value="F:histone H3K9me2 methyltransferase activity"/>
    <property type="evidence" value="ECO:0007669"/>
    <property type="project" value="Ensembl"/>
</dbReference>
<dbReference type="GO" id="GO:0042054">
    <property type="term" value="F:histone methyltransferase activity"/>
    <property type="evidence" value="ECO:0000314"/>
    <property type="project" value="UniProtKB"/>
</dbReference>
<dbReference type="GO" id="GO:0000977">
    <property type="term" value="F:RNA polymerase II transcription regulatory region sequence-specific DNA binding"/>
    <property type="evidence" value="ECO:0007669"/>
    <property type="project" value="Ensembl"/>
</dbReference>
<dbReference type="GO" id="GO:0008757">
    <property type="term" value="F:S-adenosylmethionine-dependent methyltransferase activity"/>
    <property type="evidence" value="ECO:0000314"/>
    <property type="project" value="UniProtKB"/>
</dbReference>
<dbReference type="GO" id="GO:0000976">
    <property type="term" value="F:transcription cis-regulatory region binding"/>
    <property type="evidence" value="ECO:0000250"/>
    <property type="project" value="UniProtKB"/>
</dbReference>
<dbReference type="GO" id="GO:0008270">
    <property type="term" value="F:zinc ion binding"/>
    <property type="evidence" value="ECO:0007669"/>
    <property type="project" value="InterPro"/>
</dbReference>
<dbReference type="GO" id="GO:0001835">
    <property type="term" value="P:blastocyst hatching"/>
    <property type="evidence" value="ECO:0007669"/>
    <property type="project" value="Ensembl"/>
</dbReference>
<dbReference type="GO" id="GO:0030154">
    <property type="term" value="P:cell differentiation"/>
    <property type="evidence" value="ECO:0007669"/>
    <property type="project" value="UniProtKB-KW"/>
</dbReference>
<dbReference type="GO" id="GO:0042149">
    <property type="term" value="P:cellular response to glucose starvation"/>
    <property type="evidence" value="ECO:0000315"/>
    <property type="project" value="ComplexPortal"/>
</dbReference>
<dbReference type="GO" id="GO:0071456">
    <property type="term" value="P:cellular response to hypoxia"/>
    <property type="evidence" value="ECO:0000314"/>
    <property type="project" value="MGI"/>
</dbReference>
<dbReference type="GO" id="GO:0006325">
    <property type="term" value="P:chromatin organization"/>
    <property type="evidence" value="ECO:0000304"/>
    <property type="project" value="ProtInc"/>
</dbReference>
<dbReference type="GO" id="GO:0007623">
    <property type="term" value="P:circadian rhythm"/>
    <property type="evidence" value="ECO:0000250"/>
    <property type="project" value="UniProtKB"/>
</dbReference>
<dbReference type="GO" id="GO:0008340">
    <property type="term" value="P:determination of adult lifespan"/>
    <property type="evidence" value="ECO:0007669"/>
    <property type="project" value="Ensembl"/>
</dbReference>
<dbReference type="GO" id="GO:0006974">
    <property type="term" value="P:DNA damage response"/>
    <property type="evidence" value="ECO:0000314"/>
    <property type="project" value="MGI"/>
</dbReference>
<dbReference type="GO" id="GO:0097009">
    <property type="term" value="P:energy homeostasis"/>
    <property type="evidence" value="ECO:0000315"/>
    <property type="project" value="ComplexPortal"/>
</dbReference>
<dbReference type="GO" id="GO:0044725">
    <property type="term" value="P:epigenetic programming in the zygotic pronuclei"/>
    <property type="evidence" value="ECO:0000314"/>
    <property type="project" value="UniProt"/>
</dbReference>
<dbReference type="GO" id="GO:0032259">
    <property type="term" value="P:methylation"/>
    <property type="evidence" value="ECO:0007669"/>
    <property type="project" value="UniProtKB-KW"/>
</dbReference>
<dbReference type="GO" id="GO:0045786">
    <property type="term" value="P:negative regulation of cell cycle"/>
    <property type="evidence" value="ECO:0000315"/>
    <property type="project" value="ComplexPortal"/>
</dbReference>
<dbReference type="GO" id="GO:0045892">
    <property type="term" value="P:negative regulation of DNA-templated transcription"/>
    <property type="evidence" value="ECO:0000315"/>
    <property type="project" value="ComplexPortal"/>
</dbReference>
<dbReference type="GO" id="GO:0000122">
    <property type="term" value="P:negative regulation of transcription by RNA polymerase II"/>
    <property type="evidence" value="ECO:0000315"/>
    <property type="project" value="MGI"/>
</dbReference>
<dbReference type="GO" id="GO:0000183">
    <property type="term" value="P:rDNA heterochromatin formation"/>
    <property type="evidence" value="ECO:0000314"/>
    <property type="project" value="UniProtKB"/>
</dbReference>
<dbReference type="GO" id="GO:0030500">
    <property type="term" value="P:regulation of bone mineralization"/>
    <property type="evidence" value="ECO:0007669"/>
    <property type="project" value="Ensembl"/>
</dbReference>
<dbReference type="GO" id="GO:2000772">
    <property type="term" value="P:regulation of cellular senescence"/>
    <property type="evidence" value="ECO:0007669"/>
    <property type="project" value="Ensembl"/>
</dbReference>
<dbReference type="GO" id="GO:0006282">
    <property type="term" value="P:regulation of DNA repair"/>
    <property type="evidence" value="ECO:0007669"/>
    <property type="project" value="Ensembl"/>
</dbReference>
<dbReference type="GO" id="GO:0040014">
    <property type="term" value="P:regulation of multicellular organism growth"/>
    <property type="evidence" value="ECO:0007669"/>
    <property type="project" value="Ensembl"/>
</dbReference>
<dbReference type="GO" id="GO:0046015">
    <property type="term" value="P:regulation of transcription by glucose"/>
    <property type="evidence" value="ECO:0000315"/>
    <property type="project" value="ComplexPortal"/>
</dbReference>
<dbReference type="GO" id="GO:0006364">
    <property type="term" value="P:rRNA processing"/>
    <property type="evidence" value="ECO:0007669"/>
    <property type="project" value="UniProtKB-KW"/>
</dbReference>
<dbReference type="CDD" id="cd18639">
    <property type="entry name" value="CD_SUV39H1_like"/>
    <property type="match status" value="1"/>
</dbReference>
<dbReference type="CDD" id="cd10525">
    <property type="entry name" value="SET_SUV39H1"/>
    <property type="match status" value="1"/>
</dbReference>
<dbReference type="FunFam" id="2.170.270.10:FF:000008">
    <property type="entry name" value="Histone-lysine N-methyltransferase"/>
    <property type="match status" value="1"/>
</dbReference>
<dbReference type="FunFam" id="2.40.50.40:FF:000015">
    <property type="entry name" value="Histone-lysine N-methyltransferase"/>
    <property type="match status" value="1"/>
</dbReference>
<dbReference type="Gene3D" id="2.40.50.40">
    <property type="match status" value="1"/>
</dbReference>
<dbReference type="Gene3D" id="2.170.270.10">
    <property type="entry name" value="SET domain"/>
    <property type="match status" value="1"/>
</dbReference>
<dbReference type="InterPro" id="IPR016197">
    <property type="entry name" value="Chromo-like_dom_sf"/>
</dbReference>
<dbReference type="InterPro" id="IPR000953">
    <property type="entry name" value="Chromo/chromo_shadow_dom"/>
</dbReference>
<dbReference type="InterPro" id="IPR023780">
    <property type="entry name" value="Chromo_domain"/>
</dbReference>
<dbReference type="InterPro" id="IPR023779">
    <property type="entry name" value="Chromodomain_CS"/>
</dbReference>
<dbReference type="InterPro" id="IPR011381">
    <property type="entry name" value="H3-K9_MeTrfase_SUV39H1/2-like"/>
</dbReference>
<dbReference type="InterPro" id="IPR050973">
    <property type="entry name" value="H3K9_Histone-Lys_N-MTase"/>
</dbReference>
<dbReference type="InterPro" id="IPR003616">
    <property type="entry name" value="Post-SET_dom"/>
</dbReference>
<dbReference type="InterPro" id="IPR007728">
    <property type="entry name" value="Pre-SET_dom"/>
</dbReference>
<dbReference type="InterPro" id="IPR001214">
    <property type="entry name" value="SET_dom"/>
</dbReference>
<dbReference type="InterPro" id="IPR046341">
    <property type="entry name" value="SET_dom_sf"/>
</dbReference>
<dbReference type="PANTHER" id="PTHR46223">
    <property type="entry name" value="HISTONE-LYSINE N-METHYLTRANSFERASE SUV39H"/>
    <property type="match status" value="1"/>
</dbReference>
<dbReference type="PANTHER" id="PTHR46223:SF1">
    <property type="entry name" value="HISTONE-LYSINE N-METHYLTRANSFERASE SUV39H1"/>
    <property type="match status" value="1"/>
</dbReference>
<dbReference type="Pfam" id="PF00385">
    <property type="entry name" value="Chromo"/>
    <property type="match status" value="1"/>
</dbReference>
<dbReference type="Pfam" id="PF05033">
    <property type="entry name" value="Pre-SET"/>
    <property type="match status" value="1"/>
</dbReference>
<dbReference type="Pfam" id="PF00856">
    <property type="entry name" value="SET"/>
    <property type="match status" value="1"/>
</dbReference>
<dbReference type="PIRSF" id="PIRSF009343">
    <property type="entry name" value="SUV39_SET"/>
    <property type="match status" value="1"/>
</dbReference>
<dbReference type="SMART" id="SM00298">
    <property type="entry name" value="CHROMO"/>
    <property type="match status" value="1"/>
</dbReference>
<dbReference type="SMART" id="SM00508">
    <property type="entry name" value="PostSET"/>
    <property type="match status" value="1"/>
</dbReference>
<dbReference type="SMART" id="SM00468">
    <property type="entry name" value="PreSET"/>
    <property type="match status" value="1"/>
</dbReference>
<dbReference type="SMART" id="SM00317">
    <property type="entry name" value="SET"/>
    <property type="match status" value="1"/>
</dbReference>
<dbReference type="SUPFAM" id="SSF54160">
    <property type="entry name" value="Chromo domain-like"/>
    <property type="match status" value="1"/>
</dbReference>
<dbReference type="SUPFAM" id="SSF82199">
    <property type="entry name" value="SET domain"/>
    <property type="match status" value="1"/>
</dbReference>
<dbReference type="PROSITE" id="PS00598">
    <property type="entry name" value="CHROMO_1"/>
    <property type="match status" value="1"/>
</dbReference>
<dbReference type="PROSITE" id="PS50013">
    <property type="entry name" value="CHROMO_2"/>
    <property type="match status" value="1"/>
</dbReference>
<dbReference type="PROSITE" id="PS50868">
    <property type="entry name" value="POST_SET"/>
    <property type="match status" value="1"/>
</dbReference>
<dbReference type="PROSITE" id="PS50867">
    <property type="entry name" value="PRE_SET"/>
    <property type="match status" value="1"/>
</dbReference>
<dbReference type="PROSITE" id="PS51579">
    <property type="entry name" value="SAM_MT43_SUVAR39_3"/>
    <property type="match status" value="1"/>
</dbReference>
<dbReference type="PROSITE" id="PS50280">
    <property type="entry name" value="SET"/>
    <property type="match status" value="1"/>
</dbReference>
<gene>
    <name type="primary">SUV39H1</name>
    <name type="synonym">KMT1A</name>
    <name type="synonym">SUV39H</name>
</gene>
<feature type="chain" id="PRO_0000186057" description="Histone-lysine N-methyltransferase SUV39H1">
    <location>
        <begin position="1"/>
        <end position="412"/>
    </location>
</feature>
<feature type="domain" description="Chromo" evidence="2">
    <location>
        <begin position="43"/>
        <end position="101"/>
    </location>
</feature>
<feature type="domain" description="Pre-SET" evidence="4">
    <location>
        <begin position="179"/>
        <end position="240"/>
    </location>
</feature>
<feature type="domain" description="SET" evidence="5">
    <location>
        <begin position="243"/>
        <end position="366"/>
    </location>
</feature>
<feature type="domain" description="Post-SET" evidence="3">
    <location>
        <begin position="396"/>
        <end position="412"/>
    </location>
</feature>
<feature type="region of interest" description="Interaction with SIRT1">
    <location>
        <begin position="1"/>
        <end position="89"/>
    </location>
</feature>
<feature type="region of interest" description="Mediates interaction with MECOM" evidence="1">
    <location>
        <begin position="255"/>
        <end position="377"/>
    </location>
</feature>
<feature type="binding site" evidence="1">
    <location>
        <position position="181"/>
    </location>
    <ligand>
        <name>Zn(2+)</name>
        <dbReference type="ChEBI" id="CHEBI:29105"/>
        <label>1</label>
    </ligand>
</feature>
<feature type="binding site" evidence="1">
    <location>
        <position position="181"/>
    </location>
    <ligand>
        <name>Zn(2+)</name>
        <dbReference type="ChEBI" id="CHEBI:29105"/>
        <label>2</label>
    </ligand>
</feature>
<feature type="binding site" evidence="1">
    <location>
        <position position="183"/>
    </location>
    <ligand>
        <name>Zn(2+)</name>
        <dbReference type="ChEBI" id="CHEBI:29105"/>
        <label>1</label>
    </ligand>
</feature>
<feature type="binding site" evidence="1">
    <location>
        <position position="186"/>
    </location>
    <ligand>
        <name>Zn(2+)</name>
        <dbReference type="ChEBI" id="CHEBI:29105"/>
        <label>1</label>
    </ligand>
</feature>
<feature type="binding site" evidence="1">
    <location>
        <position position="186"/>
    </location>
    <ligand>
        <name>Zn(2+)</name>
        <dbReference type="ChEBI" id="CHEBI:29105"/>
        <label>3</label>
    </ligand>
</feature>
<feature type="binding site" evidence="1">
    <location>
        <position position="194"/>
    </location>
    <ligand>
        <name>Zn(2+)</name>
        <dbReference type="ChEBI" id="CHEBI:29105"/>
        <label>1</label>
    </ligand>
</feature>
<feature type="binding site" evidence="1">
    <location>
        <position position="195"/>
    </location>
    <ligand>
        <name>Zn(2+)</name>
        <dbReference type="ChEBI" id="CHEBI:29105"/>
        <label>1</label>
    </ligand>
</feature>
<feature type="binding site" evidence="1">
    <location>
        <position position="195"/>
    </location>
    <ligand>
        <name>Zn(2+)</name>
        <dbReference type="ChEBI" id="CHEBI:29105"/>
        <label>2</label>
    </ligand>
</feature>
<feature type="binding site" evidence="1">
    <location>
        <position position="222"/>
    </location>
    <ligand>
        <name>Zn(2+)</name>
        <dbReference type="ChEBI" id="CHEBI:29105"/>
        <label>2</label>
    </ligand>
</feature>
<feature type="binding site" evidence="1">
    <location>
        <position position="222"/>
    </location>
    <ligand>
        <name>Zn(2+)</name>
        <dbReference type="ChEBI" id="CHEBI:29105"/>
        <label>3</label>
    </ligand>
</feature>
<feature type="binding site" evidence="1">
    <location>
        <position position="226"/>
    </location>
    <ligand>
        <name>Zn(2+)</name>
        <dbReference type="ChEBI" id="CHEBI:29105"/>
        <label>2</label>
    </ligand>
</feature>
<feature type="binding site" evidence="1">
    <location>
        <position position="228"/>
    </location>
    <ligand>
        <name>Zn(2+)</name>
        <dbReference type="ChEBI" id="CHEBI:29105"/>
        <label>3</label>
    </ligand>
</feature>
<feature type="binding site" evidence="1">
    <location>
        <position position="232"/>
    </location>
    <ligand>
        <name>Zn(2+)</name>
        <dbReference type="ChEBI" id="CHEBI:29105"/>
        <label>3</label>
    </ligand>
</feature>
<feature type="binding site" evidence="1">
    <location>
        <begin position="254"/>
        <end position="256"/>
    </location>
    <ligand>
        <name>S-adenosyl-L-methionine</name>
        <dbReference type="ChEBI" id="CHEBI:59789"/>
    </ligand>
</feature>
<feature type="binding site" evidence="5">
    <location>
        <position position="297"/>
    </location>
    <ligand>
        <name>S-adenosyl-L-methionine</name>
        <dbReference type="ChEBI" id="CHEBI:59789"/>
    </ligand>
</feature>
<feature type="binding site" evidence="1">
    <location>
        <begin position="323"/>
        <end position="324"/>
    </location>
    <ligand>
        <name>S-adenosyl-L-methionine</name>
        <dbReference type="ChEBI" id="CHEBI:59789"/>
    </ligand>
</feature>
<feature type="binding site" evidence="1">
    <location>
        <position position="326"/>
    </location>
    <ligand>
        <name>Zn(2+)</name>
        <dbReference type="ChEBI" id="CHEBI:29105"/>
        <label>4</label>
    </ligand>
</feature>
<feature type="binding site" evidence="1">
    <location>
        <position position="400"/>
    </location>
    <ligand>
        <name>Zn(2+)</name>
        <dbReference type="ChEBI" id="CHEBI:29105"/>
        <label>4</label>
    </ligand>
</feature>
<feature type="binding site" evidence="1">
    <location>
        <position position="402"/>
    </location>
    <ligand>
        <name>Zn(2+)</name>
        <dbReference type="ChEBI" id="CHEBI:29105"/>
        <label>4</label>
    </ligand>
</feature>
<feature type="binding site" evidence="1">
    <location>
        <position position="407"/>
    </location>
    <ligand>
        <name>Zn(2+)</name>
        <dbReference type="ChEBI" id="CHEBI:29105"/>
        <label>4</label>
    </ligand>
</feature>
<feature type="modified residue" description="N6-acetyllysine" evidence="27">
    <location>
        <position position="266"/>
    </location>
</feature>
<feature type="modified residue" description="Phosphoserine" evidence="35 36 37 38 39 40">
    <location>
        <position position="391"/>
    </location>
</feature>
<feature type="splice variant" id="VSP_054286" description="In isoform 2." evidence="33">
    <original>MAENLK</original>
    <variation>MVGMSRLRNDRLADPLT</variation>
    <location>
        <begin position="1"/>
        <end position="6"/>
    </location>
</feature>
<feature type="mutagenesis site" description="Abolishes methyltransferase activity." evidence="22">
    <original>W</original>
    <variation>A</variation>
    <location>
        <position position="64"/>
    </location>
</feature>
<feature type="mutagenesis site" description="Abolishes methyltransferase activity." evidence="22">
    <original>Y</original>
    <variation>A</variation>
    <location>
        <position position="67"/>
    </location>
</feature>
<feature type="mutagenesis site" description="Loss of SIRT1-mediated up-regulation of enzymatic activity." evidence="27">
    <original>K</original>
    <variation>A</variation>
    <location>
        <position position="266"/>
    </location>
</feature>
<feature type="mutagenesis site" description="Significant loss of enzymatic activity." evidence="27">
    <original>K</original>
    <variation>Q</variation>
    <location>
        <position position="266"/>
    </location>
</feature>
<feature type="mutagenesis site" description="Strongly increases methylation of histone H3." evidence="10">
    <original>H</original>
    <variation>R</variation>
    <location>
        <position position="320"/>
    </location>
</feature>
<feature type="mutagenesis site" description="Abolishes methylation of histone H3." evidence="10">
    <original>H</original>
    <variation>L</variation>
    <variation>K</variation>
    <location>
        <position position="324"/>
    </location>
</feature>
<feature type="mutagenesis site" description="Abolishes methylation of histone H3." evidence="10">
    <original>C</original>
    <variation>A</variation>
    <location>
        <position position="326"/>
    </location>
</feature>
<feature type="sequence conflict" description="In Ref. 4; BAD96791." evidence="34" ref="4">
    <original>L</original>
    <variation>P</variation>
    <location>
        <position position="213"/>
    </location>
</feature>
<feature type="strand" evidence="41">
    <location>
        <begin position="45"/>
        <end position="53"/>
    </location>
</feature>
<feature type="strand" evidence="41">
    <location>
        <begin position="58"/>
        <end position="64"/>
    </location>
</feature>
<feature type="helix" evidence="41">
    <location>
        <begin position="69"/>
        <end position="71"/>
    </location>
</feature>
<feature type="strand" evidence="41">
    <location>
        <begin position="73"/>
        <end position="76"/>
    </location>
</feature>
<feature type="helix" evidence="41">
    <location>
        <begin position="77"/>
        <end position="79"/>
    </location>
</feature>
<feature type="helix" evidence="41">
    <location>
        <begin position="83"/>
        <end position="103"/>
    </location>
</feature>
<sequence>MAENLKGCSVCCKSSWNQLQDLCRLAKLSCPALGISKRNLYDFEVEYLCDYKKIREQEYYLVKWRGYPDSESTWEPRQNLKCVRILKQFHKDLERELLRRHHRSKTPRHLDPSLANYLVQKAKQRRALRRWEQELNAKRSHLGRITVENEVDLDGPPRAFVYINEYRVGEGITLNQVAVGCECQDCLWAPTGGCCPGASLHKFAYNDQGQVRLRAGLPIYECNSRCRCGYDCPNRVVQKGIRYDLCIFRTDDGRGWGVRTLEKIRKNSFVMEYVGEIITSEEAERRGQIYDRQGATYLFDLDYVEDVYTVDAAYYGNISHFVNHSCDPNLQVYNVFIDNLDERLPRIAFFATRTIRAGEELTFDYNMQVDPVDMESTRMDSNFGLAGLPGSPKKRVRIECKCGTESCRKYLF</sequence>
<name>SUV91_HUMAN</name>
<evidence type="ECO:0000250" key="1"/>
<evidence type="ECO:0000255" key="2">
    <source>
        <dbReference type="PROSITE-ProRule" id="PRU00053"/>
    </source>
</evidence>
<evidence type="ECO:0000255" key="3">
    <source>
        <dbReference type="PROSITE-ProRule" id="PRU00155"/>
    </source>
</evidence>
<evidence type="ECO:0000255" key="4">
    <source>
        <dbReference type="PROSITE-ProRule" id="PRU00157"/>
    </source>
</evidence>
<evidence type="ECO:0000255" key="5">
    <source>
        <dbReference type="PROSITE-ProRule" id="PRU00190"/>
    </source>
</evidence>
<evidence type="ECO:0000255" key="6">
    <source>
        <dbReference type="PROSITE-ProRule" id="PRU00912"/>
    </source>
</evidence>
<evidence type="ECO:0000269" key="7">
    <source>
    </source>
</evidence>
<evidence type="ECO:0000269" key="8">
    <source>
    </source>
</evidence>
<evidence type="ECO:0000269" key="9">
    <source>
    </source>
</evidence>
<evidence type="ECO:0000269" key="10">
    <source>
    </source>
</evidence>
<evidence type="ECO:0000269" key="11">
    <source>
    </source>
</evidence>
<evidence type="ECO:0000269" key="12">
    <source>
    </source>
</evidence>
<evidence type="ECO:0000269" key="13">
    <source>
    </source>
</evidence>
<evidence type="ECO:0000269" key="14">
    <source>
    </source>
</evidence>
<evidence type="ECO:0000269" key="15">
    <source>
    </source>
</evidence>
<evidence type="ECO:0000269" key="16">
    <source>
    </source>
</evidence>
<evidence type="ECO:0000269" key="17">
    <source>
    </source>
</evidence>
<evidence type="ECO:0000269" key="18">
    <source>
    </source>
</evidence>
<evidence type="ECO:0000269" key="19">
    <source>
    </source>
</evidence>
<evidence type="ECO:0000269" key="20">
    <source>
    </source>
</evidence>
<evidence type="ECO:0000269" key="21">
    <source>
    </source>
</evidence>
<evidence type="ECO:0000269" key="22">
    <source>
    </source>
</evidence>
<evidence type="ECO:0000269" key="23">
    <source>
    </source>
</evidence>
<evidence type="ECO:0000269" key="24">
    <source>
    </source>
</evidence>
<evidence type="ECO:0000269" key="25">
    <source>
    </source>
</evidence>
<evidence type="ECO:0000269" key="26">
    <source>
    </source>
</evidence>
<evidence type="ECO:0000269" key="27">
    <source>
    </source>
</evidence>
<evidence type="ECO:0000269" key="28">
    <source>
    </source>
</evidence>
<evidence type="ECO:0000269" key="29">
    <source>
    </source>
</evidence>
<evidence type="ECO:0000269" key="30">
    <source>
    </source>
</evidence>
<evidence type="ECO:0000269" key="31">
    <source>
    </source>
</evidence>
<evidence type="ECO:0000269" key="32">
    <source>
    </source>
</evidence>
<evidence type="ECO:0000303" key="33">
    <source>
    </source>
</evidence>
<evidence type="ECO:0000305" key="34"/>
<evidence type="ECO:0007744" key="35">
    <source>
    </source>
</evidence>
<evidence type="ECO:0007744" key="36">
    <source>
    </source>
</evidence>
<evidence type="ECO:0007744" key="37">
    <source>
    </source>
</evidence>
<evidence type="ECO:0007744" key="38">
    <source>
    </source>
</evidence>
<evidence type="ECO:0007744" key="39">
    <source>
    </source>
</evidence>
<evidence type="ECO:0007744" key="40">
    <source>
    </source>
</evidence>
<evidence type="ECO:0007829" key="41">
    <source>
        <dbReference type="PDB" id="3MTS"/>
    </source>
</evidence>
<accession>O43463</accession>
<accession>B2R6E8</accession>
<accession>B4DST0</accession>
<accession>Q53G60</accession>
<accession>Q6FHK6</accession>
<organism>
    <name type="scientific">Homo sapiens</name>
    <name type="common">Human</name>
    <dbReference type="NCBI Taxonomy" id="9606"/>
    <lineage>
        <taxon>Eukaryota</taxon>
        <taxon>Metazoa</taxon>
        <taxon>Chordata</taxon>
        <taxon>Craniata</taxon>
        <taxon>Vertebrata</taxon>
        <taxon>Euteleostomi</taxon>
        <taxon>Mammalia</taxon>
        <taxon>Eutheria</taxon>
        <taxon>Euarchontoglires</taxon>
        <taxon>Primates</taxon>
        <taxon>Haplorrhini</taxon>
        <taxon>Catarrhini</taxon>
        <taxon>Hominidae</taxon>
        <taxon>Homo</taxon>
    </lineage>
</organism>
<comment type="function">
    <text evidence="17 21 25 26 27 28 32">Histone methyltransferase that specifically trimethylates 'Lys-9' of histone H3 using monomethylated H3 'Lys-9' as substrate. Also weakly methylates histone H1 (in vitro). H3 'Lys-9' trimethylation represents a specific tag for epigenetic transcriptional repression by recruiting HP1 (CBX1, CBX3 and/or CBX5) proteins to methylated histones. Mainly functions in heterochromatin regions, thereby playing a central role in the establishment of constitutive heterochromatin at pericentric and telomere regions. H3 'Lys-9' trimethylation is also required to direct DNA methylation at pericentric repeats. SUV39H1 is targeted to histone H3 via its interaction with RB1 and is involved in many processes, such as repression of MYOD1-stimulated differentiation, regulation of the control switch for exiting the cell cycle and entering differentiation, repression by the PML-RARA fusion protein, BMP-induced repression, repression of switch recombination to IgA and regulation of telomere length. Component of the eNoSC (energy-dependent nucleolar silencing) complex, a complex that mediates silencing of rDNA in response to intracellular energy status and acts by recruiting histone-modifying enzymes. The eNoSC complex is able to sense the energy status of cell: upon glucose starvation, elevation of NAD(+)/NADP(+) ratio activates SIRT1, leading to histone H3 deacetylation followed by dimethylation of H3 at 'Lys-9' (H3K9me2) by SUV39H1 and the formation of silent chromatin in the rDNA locus. Recruited by the large PER complex to the E-box elements of the circadian target genes such as PER2 itself or PER1, contributes to the conversion of local chromatin to a heterochromatin-like repressive state through H3 'Lys-9' trimethylation.</text>
</comment>
<comment type="function">
    <text evidence="31">(Microbial infection) Plays a role in defense against mycobacterial infections. Methylates M.tuberculosis HupB on 'Lys-140', probably methylates HupB of M.bovis also. Methylation has an inhibitory effect on mycobacterial growth in the host. Macrophages expressing about 60% SUV39H1 are slightly more susceptible to M.bovis or M.tuberculosis infection. Chaetocin (an inhibitor of this enzyme) increases macrophage survival of M.tuberculosis. This protein inhibits biofilm formation by M.tuberculosis via 'Lys-140' trimethylation.</text>
</comment>
<comment type="catalytic activity">
    <reaction evidence="6 10 27">
        <text>L-lysyl(9)-[histone H3] + 3 S-adenosyl-L-methionine = N(6),N(6),N(6)-trimethyl-L-lysyl(9)-[histone H3] + 3 S-adenosyl-L-homocysteine + 3 H(+)</text>
        <dbReference type="Rhea" id="RHEA:60276"/>
        <dbReference type="Rhea" id="RHEA-COMP:15538"/>
        <dbReference type="Rhea" id="RHEA-COMP:15546"/>
        <dbReference type="ChEBI" id="CHEBI:15378"/>
        <dbReference type="ChEBI" id="CHEBI:29969"/>
        <dbReference type="ChEBI" id="CHEBI:57856"/>
        <dbReference type="ChEBI" id="CHEBI:59789"/>
        <dbReference type="ChEBI" id="CHEBI:61961"/>
        <dbReference type="EC" id="2.1.1.355"/>
    </reaction>
</comment>
<comment type="activity regulation">
    <text evidence="22 29">Inhibited by S-adenosyl-L-homocysteine. Negatively regulated by CCAR2.</text>
</comment>
<comment type="subunit">
    <text evidence="7 9 11 12 13 14 15 16 18 19 23 24 26 28 29 30">Interacts with H3 and H4 histones. Interacts with GFI1B, DNMT3B, CBX1, CBX4, CCAR2, MBD1, RUNX1, RUNX3, MYOD1, SMAD5 and RB1. Interacts with SBF1 through the SET domain. Interacts with HDAC1 and HDAC2 through the N-terminus and associates with the core histone deacetylase complex composed of HDAC1, HDAC2, RBBP4 and RBBP7. Component of the eNoSC complex, composed of SIRT1, SUV39H1 and RRP8. Interacts (via SET domain) with MECOM; enhances MECOM transcriptional repression activity. Interacts with LMNA; the interaction increases stability of SUV39H1. The large PER complex involved in the histone methylation is composed of at least PER2, CBX3, TRIM28, SUV39H1 and/or SUV39H2; CBX3 mediates the formation of the complex.</text>
</comment>
<comment type="subunit">
    <text evidence="20">(Microbial infection) Interacts with HTLV-1 Tax protein, leading to abrogate Tax transactivation of HTLV-1 LTR.</text>
</comment>
<comment type="interaction">
    <interactant intactId="EBI-349968">
        <id>O43463</id>
    </interactant>
    <interactant intactId="EBI-1043378">
        <id>O95260</id>
        <label>ATE1</label>
    </interactant>
    <organismsDiffer>false</organismsDiffer>
    <experiments>2</experiments>
</comment>
<comment type="interaction">
    <interactant intactId="EBI-349968">
        <id>O43463</id>
    </interactant>
    <interactant intactId="EBI-11954292">
        <id>Q86V38</id>
        <label>ATN1</label>
    </interactant>
    <organismsDiffer>false</organismsDiffer>
    <experiments>3</experiments>
</comment>
<comment type="interaction">
    <interactant intactId="EBI-349968">
        <id>O43463</id>
    </interactant>
    <interactant intactId="EBI-6597578">
        <id>Q9C0K0</id>
        <label>BCL11B</label>
    </interactant>
    <organismsDiffer>false</organismsDiffer>
    <experiments>3</experiments>
</comment>
<comment type="interaction">
    <interactant intactId="EBI-349968">
        <id>O43463</id>
    </interactant>
    <interactant intactId="EBI-8466055">
        <id>Q6P047</id>
        <label>C8orf74</label>
    </interactant>
    <organismsDiffer>false</organismsDiffer>
    <experiments>2</experiments>
</comment>
<comment type="interaction">
    <interactant intactId="EBI-349968">
        <id>O43463</id>
    </interactant>
    <interactant intactId="EBI-78129">
        <id>P83916</id>
        <label>CBX1</label>
    </interactant>
    <organismsDiffer>false</organismsDiffer>
    <experiments>6</experiments>
</comment>
<comment type="interaction">
    <interactant intactId="EBI-349968">
        <id>O43463</id>
    </interactant>
    <interactant intactId="EBI-78176">
        <id>Q13185</id>
        <label>CBX3</label>
    </interactant>
    <organismsDiffer>false</organismsDiffer>
    <experiments>9</experiments>
</comment>
<comment type="interaction">
    <interactant intactId="EBI-349968">
        <id>O43463</id>
    </interactant>
    <interactant intactId="EBI-78219">
        <id>P45973</id>
        <label>CBX5</label>
    </interactant>
    <organismsDiffer>false</organismsDiffer>
    <experiments>18</experiments>
</comment>
<comment type="interaction">
    <interactant intactId="EBI-349968">
        <id>O43463</id>
    </interactant>
    <interactant intactId="EBI-1773949">
        <id>Q9BXL8</id>
        <label>CDCA4</label>
    </interactant>
    <organismsDiffer>false</organismsDiffer>
    <experiments>2</experiments>
</comment>
<comment type="interaction">
    <interactant intactId="EBI-349968">
        <id>O43463</id>
    </interactant>
    <interactant intactId="EBI-739624">
        <id>Q8NHQ1</id>
        <label>CEP70</label>
    </interactant>
    <organismsDiffer>false</organismsDiffer>
    <experiments>3</experiments>
</comment>
<comment type="interaction">
    <interactant intactId="EBI-349968">
        <id>O43463</id>
    </interactant>
    <interactant intactId="EBI-745579">
        <id>P49761</id>
        <label>CLK3</label>
    </interactant>
    <organismsDiffer>false</organismsDiffer>
    <experiments>2</experiments>
</comment>
<comment type="interaction">
    <interactant intactId="EBI-349968">
        <id>O43463</id>
    </interactant>
    <interactant intactId="EBI-740686">
        <id>Q5TAQ9</id>
        <label>DCAF8</label>
    </interactant>
    <organismsDiffer>false</organismsDiffer>
    <experiments>2</experiments>
</comment>
<comment type="interaction">
    <interactant intactId="EBI-349968">
        <id>O43463</id>
    </interactant>
    <interactant intactId="EBI-739789">
        <id>Q92997</id>
        <label>DVL3</label>
    </interactant>
    <organismsDiffer>false</organismsDiffer>
    <experiments>3</experiments>
</comment>
<comment type="interaction">
    <interactant intactId="EBI-349968">
        <id>O43463</id>
    </interactant>
    <interactant intactId="EBI-530054">
        <id>Q15910</id>
        <label>EZH2</label>
    </interactant>
    <organismsDiffer>false</organismsDiffer>
    <experiments>2</experiments>
</comment>
<comment type="interaction">
    <interactant intactId="EBI-349968">
        <id>O43463</id>
    </interactant>
    <interactant intactId="EBI-7962481">
        <id>Q6ZNL6</id>
        <label>FGD5</label>
    </interactant>
    <organismsDiffer>false</organismsDiffer>
    <experiments>2</experiments>
</comment>
<comment type="interaction">
    <interactant intactId="EBI-349968">
        <id>O43463</id>
    </interactant>
    <interactant intactId="EBI-5916454">
        <id>A6NEM1</id>
        <label>GOLGA6L9</label>
    </interactant>
    <organismsDiffer>false</organismsDiffer>
    <experiments>3</experiments>
</comment>
<comment type="interaction">
    <interactant intactId="EBI-349968">
        <id>O43463</id>
    </interactant>
    <interactant intactId="EBI-5666657">
        <id>Q9NWQ4</id>
        <label>GPATCH2L</label>
    </interactant>
    <organismsDiffer>false</organismsDiffer>
    <experiments>2</experiments>
</comment>
<comment type="interaction">
    <interactant intactId="EBI-349968">
        <id>O43463</id>
    </interactant>
    <interactant intactId="EBI-6115579">
        <id>Q9BX10</id>
        <label>GTPBP2</label>
    </interactant>
    <organismsDiffer>false</organismsDiffer>
    <experiments>2</experiments>
</comment>
<comment type="interaction">
    <interactant intactId="EBI-349968">
        <id>O43463</id>
    </interactant>
    <interactant intactId="EBI-301834">
        <id>Q13547</id>
        <label>HDAC1</label>
    </interactant>
    <organismsDiffer>false</organismsDiffer>
    <experiments>3</experiments>
</comment>
<comment type="interaction">
    <interactant intactId="EBI-349968">
        <id>O43463</id>
    </interactant>
    <interactant intactId="EBI-301821">
        <id>Q92769</id>
        <label>HDAC2</label>
    </interactant>
    <organismsDiffer>false</organismsDiffer>
    <experiments>3</experiments>
</comment>
<comment type="interaction">
    <interactant intactId="EBI-349968">
        <id>O43463</id>
    </interactant>
    <interactant intactId="EBI-10183977">
        <id>V9HWG0</id>
        <label>HEL25</label>
    </interactant>
    <organismsDiffer>false</organismsDiffer>
    <experiments>3</experiments>
</comment>
<comment type="interaction">
    <interactant intactId="EBI-349968">
        <id>O43463</id>
    </interactant>
    <interactant intactId="EBI-743290">
        <id>Q96ED9</id>
        <label>HOOK2</label>
    </interactant>
    <organismsDiffer>false</organismsDiffer>
    <experiments>4</experiments>
</comment>
<comment type="interaction">
    <interactant intactId="EBI-349968">
        <id>O43463</id>
    </interactant>
    <interactant intactId="EBI-10961706">
        <id>Q96ED9-2</id>
        <label>HOOK2</label>
    </interactant>
    <organismsDiffer>false</organismsDiffer>
    <experiments>3</experiments>
</comment>
<comment type="interaction">
    <interactant intactId="EBI-349968">
        <id>O43463</id>
    </interactant>
    <interactant intactId="EBI-740785">
        <id>P49639</id>
        <label>HOXA1</label>
    </interactant>
    <organismsDiffer>false</organismsDiffer>
    <experiments>2</experiments>
</comment>
<comment type="interaction">
    <interactant intactId="EBI-349968">
        <id>O43463</id>
    </interactant>
    <interactant intactId="EBI-3923226">
        <id>P09017</id>
        <label>HOXC4</label>
    </interactant>
    <organismsDiffer>false</organismsDiffer>
    <experiments>2</experiments>
</comment>
<comment type="interaction">
    <interactant intactId="EBI-349968">
        <id>O43463</id>
    </interactant>
    <interactant intactId="EBI-8472352">
        <id>Q8TBB5</id>
        <label>KLHDC4</label>
    </interactant>
    <organismsDiffer>false</organismsDiffer>
    <experiments>2</experiments>
</comment>
<comment type="interaction">
    <interactant intactId="EBI-349968">
        <id>O43463</id>
    </interactant>
    <interactant intactId="EBI-2432309">
        <id>Q92876</id>
        <label>KLK6</label>
    </interactant>
    <organismsDiffer>false</organismsDiffer>
    <experiments>3</experiments>
</comment>
<comment type="interaction">
    <interactant intactId="EBI-349968">
        <id>O43463</id>
    </interactant>
    <interactant intactId="EBI-10172290">
        <id>P60409</id>
        <label>KRTAP10-7</label>
    </interactant>
    <organismsDiffer>false</organismsDiffer>
    <experiments>6</experiments>
</comment>
<comment type="interaction">
    <interactant intactId="EBI-349968">
        <id>O43463</id>
    </interactant>
    <interactant intactId="EBI-10171774">
        <id>P60410</id>
        <label>KRTAP10-8</label>
    </interactant>
    <organismsDiffer>false</organismsDiffer>
    <experiments>3</experiments>
</comment>
<comment type="interaction">
    <interactant intactId="EBI-349968">
        <id>O43463</id>
    </interactant>
    <interactant intactId="EBI-741037">
        <id>Q9BRK4</id>
        <label>LZTS2</label>
    </interactant>
    <organismsDiffer>false</organismsDiffer>
    <experiments>6</experiments>
</comment>
<comment type="interaction">
    <interactant intactId="EBI-349968">
        <id>O43463</id>
    </interactant>
    <interactant intactId="EBI-867196">
        <id>Q9UIS9</id>
        <label>MBD1</label>
    </interactant>
    <organismsDiffer>false</organismsDiffer>
    <experiments>5</experiments>
</comment>
<comment type="interaction">
    <interactant intactId="EBI-349968">
        <id>O43463</id>
    </interactant>
    <interactant intactId="EBI-781356">
        <id>Q13133</id>
        <label>NR1H3</label>
    </interactant>
    <organismsDiffer>false</organismsDiffer>
    <experiments>2</experiments>
</comment>
<comment type="interaction">
    <interactant intactId="EBI-349968">
        <id>O43463</id>
    </interactant>
    <interactant intactId="EBI-8466445">
        <id>A5D8V7</id>
        <label>ODAD3</label>
    </interactant>
    <organismsDiffer>false</organismsDiffer>
    <experiments>2</experiments>
</comment>
<comment type="interaction">
    <interactant intactId="EBI-349968">
        <id>O43463</id>
    </interactant>
    <interactant intactId="EBI-10892722">
        <id>Q6TGC4</id>
        <label>PADI6</label>
    </interactant>
    <organismsDiffer>false</organismsDiffer>
    <experiments>3</experiments>
</comment>
<comment type="interaction">
    <interactant intactId="EBI-349968">
        <id>O43463</id>
    </interactant>
    <interactant intactId="EBI-2339674">
        <id>Q5T6S3</id>
        <label>PHF19</label>
    </interactant>
    <organismsDiffer>false</organismsDiffer>
    <experiments>2</experiments>
</comment>
<comment type="interaction">
    <interactant intactId="EBI-349968">
        <id>O43463</id>
    </interactant>
    <interactant intactId="EBI-710402">
        <id>Q96I34</id>
        <label>PPP1R16A</label>
    </interactant>
    <organismsDiffer>false</organismsDiffer>
    <experiments>3</experiments>
</comment>
<comment type="interaction">
    <interactant intactId="EBI-349968">
        <id>O43463</id>
    </interactant>
    <interactant intactId="EBI-357598">
        <id>P62191</id>
        <label>PSMC1</label>
    </interactant>
    <organismsDiffer>false</organismsDiffer>
    <experiments>2</experiments>
</comment>
<comment type="interaction">
    <interactant intactId="EBI-349968">
        <id>O43463</id>
    </interactant>
    <interactant intactId="EBI-746453">
        <id>P54725</id>
        <label>RAD23A</label>
    </interactant>
    <organismsDiffer>false</organismsDiffer>
    <experiments>3</experiments>
</comment>
<comment type="interaction">
    <interactant intactId="EBI-349968">
        <id>O43463</id>
    </interactant>
    <interactant intactId="EBI-367363">
        <id>Q9NS23</id>
        <label>RASSF1</label>
    </interactant>
    <organismsDiffer>false</organismsDiffer>
    <experiments>2</experiments>
</comment>
<comment type="interaction">
    <interactant intactId="EBI-349968">
        <id>O43463</id>
    </interactant>
    <interactant intactId="EBI-960081">
        <id>P50749</id>
        <label>RASSF2</label>
    </interactant>
    <organismsDiffer>false</organismsDiffer>
    <experiments>2</experiments>
</comment>
<comment type="interaction">
    <interactant intactId="EBI-349968">
        <id>O43463</id>
    </interactant>
    <interactant intactId="EBI-2008793">
        <id>O43159</id>
        <label>RRP8</label>
    </interactant>
    <organismsDiffer>false</organismsDiffer>
    <experiments>3</experiments>
</comment>
<comment type="interaction">
    <interactant intactId="EBI-349968">
        <id>O43463</id>
    </interactant>
    <interactant intactId="EBI-350723">
        <id>P50454</id>
        <label>SERPINH1</label>
    </interactant>
    <organismsDiffer>false</organismsDiffer>
    <experiments>3</experiments>
</comment>
<comment type="interaction">
    <interactant intactId="EBI-349968">
        <id>O43463</id>
    </interactant>
    <interactant intactId="EBI-1802965">
        <id>Q96EB6</id>
        <label>SIRT1</label>
    </interactant>
    <organismsDiffer>false</organismsDiffer>
    <experiments>5</experiments>
</comment>
<comment type="interaction">
    <interactant intactId="EBI-349968">
        <id>O43463</id>
    </interactant>
    <interactant intactId="EBI-2659201">
        <id>Q96BD6</id>
        <label>SPSB1</label>
    </interactant>
    <organismsDiffer>false</organismsDiffer>
    <experiments>2</experiments>
</comment>
<comment type="interaction">
    <interactant intactId="EBI-349968">
        <id>O43463</id>
    </interactant>
    <interactant intactId="EBI-8484990">
        <id>Q8N4C7</id>
        <label>STX19</label>
    </interactant>
    <organismsDiffer>false</organismsDiffer>
    <experiments>2</experiments>
</comment>
<comment type="interaction">
    <interactant intactId="EBI-349968">
        <id>O43463</id>
    </interactant>
    <interactant intactId="EBI-750487">
        <id>Q8WW24</id>
        <label>TEKT4</label>
    </interactant>
    <organismsDiffer>false</organismsDiffer>
    <experiments>3</experiments>
</comment>
<comment type="interaction">
    <interactant intactId="EBI-349968">
        <id>O43463</id>
    </interactant>
    <interactant intactId="EBI-296151">
        <id>P37173</id>
        <label>TGFBR2</label>
    </interactant>
    <organismsDiffer>false</organismsDiffer>
    <experiments>3</experiments>
</comment>
<comment type="interaction">
    <interactant intactId="EBI-349968">
        <id>O43463</id>
    </interactant>
    <interactant intactId="EBI-725997">
        <id>Q8WV44</id>
        <label>TRIM41</label>
    </interactant>
    <organismsDiffer>false</organismsDiffer>
    <experiments>3</experiments>
</comment>
<comment type="interaction">
    <interactant intactId="EBI-349968">
        <id>O43463</id>
    </interactant>
    <interactant intactId="EBI-632461">
        <id>Q01081</id>
        <label>U2AF1</label>
    </interactant>
    <organismsDiffer>false</organismsDiffer>
    <experiments>2</experiments>
</comment>
<comment type="interaction">
    <interactant intactId="EBI-349968">
        <id>O43463</id>
    </interactant>
    <interactant intactId="EBI-2515601">
        <id>Q8N680</id>
        <label>ZBTB2</label>
    </interactant>
    <organismsDiffer>false</organismsDiffer>
    <experiments>3</experiments>
</comment>
<comment type="interaction">
    <interactant intactId="EBI-349968">
        <id>O43463</id>
    </interactant>
    <interactant intactId="EBI-2876965">
        <id>Q9Y2L8</id>
        <label>ZKSCAN5</label>
    </interactant>
    <organismsDiffer>false</organismsDiffer>
    <experiments>2</experiments>
</comment>
<comment type="interaction">
    <interactant intactId="EBI-349968">
        <id>O43463</id>
    </interactant>
    <interactant intactId="EBI-740727">
        <id>Q8TAU3</id>
        <label>ZNF417</label>
    </interactant>
    <organismsDiffer>false</organismsDiffer>
    <experiments>3</experiments>
</comment>
<comment type="interaction">
    <interactant intactId="EBI-349968">
        <id>O43463</id>
    </interactant>
    <interactant intactId="EBI-8489702">
        <id>Q9C0F3</id>
        <label>ZNF436</label>
    </interactant>
    <organismsDiffer>false</organismsDiffer>
    <experiments>2</experiments>
</comment>
<comment type="interaction">
    <interactant intactId="EBI-349968">
        <id>O43463</id>
    </interactant>
    <interactant intactId="EBI-11962468">
        <id>Q7Z4V0</id>
        <label>ZNF438</label>
    </interactant>
    <organismsDiffer>false</organismsDiffer>
    <experiments>3</experiments>
</comment>
<comment type="interaction">
    <interactant intactId="EBI-349968">
        <id>O43463</id>
    </interactant>
    <interactant intactId="EBI-4395789">
        <id>Q9BS31</id>
        <label>ZNF649</label>
    </interactant>
    <organismsDiffer>false</organismsDiffer>
    <experiments>2</experiments>
</comment>
<comment type="interaction">
    <interactant intactId="EBI-349968">
        <id>O43463</id>
    </interactant>
    <interactant intactId="EBI-745276">
        <id>Q9BS34</id>
        <label>ZNF670</label>
    </interactant>
    <organismsDiffer>false</organismsDiffer>
    <experiments>2</experiments>
</comment>
<comment type="interaction">
    <interactant intactId="EBI-349968">
        <id>O43463</id>
    </interactant>
    <interactant intactId="EBI-527853">
        <id>Q9UGI0</id>
        <label>ZRANB1</label>
    </interactant>
    <organismsDiffer>false</organismsDiffer>
    <experiments>3</experiments>
</comment>
<comment type="interaction">
    <interactant intactId="EBI-349968">
        <id>O43463</id>
    </interactant>
    <interactant intactId="EBI-79764">
        <id>P68432</id>
    </interactant>
    <organismsDiffer>true</organismsDiffer>
    <experiments>2</experiments>
</comment>
<comment type="subcellular location">
    <subcellularLocation>
        <location evidence="31 32">Nucleus</location>
    </subcellularLocation>
    <subcellularLocation>
        <location>Nucleus lamina</location>
    </subcellularLocation>
    <subcellularLocation>
        <location>Nucleus</location>
        <location>Nucleoplasm</location>
    </subcellularLocation>
    <subcellularLocation>
        <location>Chromosome</location>
        <location>Centromere</location>
    </subcellularLocation>
    <text>Associates with centromeric constitutive heterochromatin.</text>
</comment>
<comment type="subcellular location">
    <subcellularLocation>
        <location evidence="31">Cytoplasmic vesicle</location>
        <location evidence="31">Phagosome lumen</location>
    </subcellularLocation>
    <subcellularLocation>
        <location evidence="31">Cell membrane</location>
    </subcellularLocation>
    <text evidence="31">(Microbial infection) Upon infection with M.bovis most protein is found associated with bacteria in phagolysosomes, while part is also found in the cell membrane; localization requires bacterial HupB, when it is deleted SUV39H1 is not phagosomal.</text>
</comment>
<comment type="alternative products">
    <event type="alternative splicing"/>
    <isoform>
        <id>O43463-1</id>
        <name>1</name>
        <sequence type="displayed"/>
    </isoform>
    <isoform>
        <id>O43463-2</id>
        <name>2</name>
        <sequence type="described" ref="VSP_054286"/>
    </isoform>
</comment>
<comment type="developmental stage">
    <text>Accumulates during mitosis at centromeres during prometaphase, but dissociates from the centromere at the meta- to anaphase transition.</text>
</comment>
<comment type="induction">
    <text evidence="31">(Microbial infection) Rapidly induced in macrophages upon infection by Mycobacterium bovis, M.smegmatis and M.tuberculosis but not E.coli or Candida glabrata (at protein level).</text>
</comment>
<comment type="domain">
    <text evidence="19">Although the SET domain contains the active site of enzymatic activity, both pre-SET and post-SET domains are required for methyltransferase activity. The SET domain also participates in stable binding to heterochromatin.</text>
</comment>
<comment type="domain">
    <text evidence="19">In the pre-SET domain, Cys residues bind 3 zinc ions that are arranged in a triangular cluster; some of these Cys residues contribute to the binding of two zinc ions within the cluster.</text>
</comment>
<comment type="PTM">
    <text evidence="8">Phosphorylated on serine residues, and to a lesser degree, on threonine residues. The phosphorylated form is stabilized by SBF1 and is less active in its transcriptional repressor function.</text>
</comment>
<comment type="PTM">
    <text evidence="32">Ubiquitinated by the DCX(DCAF13) E3 ubiquitin ligase complex, leading to its degradation.</text>
</comment>
<comment type="PTM">
    <text evidence="27">Acetylated at Lys-266, leading to inhibition of enzyme activity. SIRT1-mediated deacetylation relieves this inhibition.</text>
</comment>
<comment type="PTM">
    <text evidence="31">(Microbial infection) A higher molecular weight form is also seen in M.bovis infected cells.</text>
</comment>
<comment type="similarity">
    <text evidence="6">Belongs to the class V-like SAM-binding methyltransferase superfamily. Histone-lysine methyltransferase family. Suvar3-9 subfamily.</text>
</comment>
<protein>
    <recommendedName>
        <fullName>Histone-lysine N-methyltransferase SUV39H1</fullName>
        <ecNumber evidence="10 27">2.1.1.355</ecNumber>
    </recommendedName>
    <alternativeName>
        <fullName>Histone H3-K9 methyltransferase 1</fullName>
        <shortName>H3-K9-HMTase 1</shortName>
    </alternativeName>
    <alternativeName>
        <fullName>Lysine N-methyltransferase 1A</fullName>
    </alternativeName>
    <alternativeName>
        <fullName>Position-effect variegation 3-9 homolog</fullName>
    </alternativeName>
    <alternativeName>
        <fullName>Suppressor of variegation 3-9 homolog 1</fullName>
        <shortName>Su(var)3-9 homolog 1</shortName>
    </alternativeName>
</protein>
<reference key="1">
    <citation type="journal article" date="1999" name="EMBO J.">
        <title>Functional mammalian homologues of the Drosophila PEV-modifier Su(var)3-9 encode centromere-associated proteins which complex with the heterochromatin component M31.</title>
        <authorList>
            <person name="Aagaard L."/>
            <person name="Laible G."/>
            <person name="Selenko P."/>
            <person name="Schmid M."/>
            <person name="Dorn R."/>
            <person name="Schotta G."/>
            <person name="Kuhfittig S."/>
            <person name="Wolf A."/>
            <person name="Lebersorger A."/>
            <person name="Singh P.B."/>
            <person name="Reuter G."/>
            <person name="Jenuwein T."/>
        </authorList>
    </citation>
    <scope>NUCLEOTIDE SEQUENCE [MRNA] (ISOFORM 1)</scope>
    <scope>INTERACTION WITH CBX1</scope>
    <source>
        <tissue>B-cell</tissue>
    </source>
</reference>
<reference key="2">
    <citation type="submission" date="2004-06" db="EMBL/GenBank/DDBJ databases">
        <title>Cloning of human full open reading frames in Gateway(TM) system entry vector (pDONR201).</title>
        <authorList>
            <person name="Ebert L."/>
            <person name="Schick M."/>
            <person name="Neubert P."/>
            <person name="Schatten R."/>
            <person name="Henze S."/>
            <person name="Korn B."/>
        </authorList>
    </citation>
    <scope>NUCLEOTIDE SEQUENCE [LARGE SCALE MRNA] (ISOFORM 1)</scope>
</reference>
<reference key="3">
    <citation type="journal article" date="2004" name="Nat. Genet.">
        <title>Complete sequencing and characterization of 21,243 full-length human cDNAs.</title>
        <authorList>
            <person name="Ota T."/>
            <person name="Suzuki Y."/>
            <person name="Nishikawa T."/>
            <person name="Otsuki T."/>
            <person name="Sugiyama T."/>
            <person name="Irie R."/>
            <person name="Wakamatsu A."/>
            <person name="Hayashi K."/>
            <person name="Sato H."/>
            <person name="Nagai K."/>
            <person name="Kimura K."/>
            <person name="Makita H."/>
            <person name="Sekine M."/>
            <person name="Obayashi M."/>
            <person name="Nishi T."/>
            <person name="Shibahara T."/>
            <person name="Tanaka T."/>
            <person name="Ishii S."/>
            <person name="Yamamoto J."/>
            <person name="Saito K."/>
            <person name="Kawai Y."/>
            <person name="Isono Y."/>
            <person name="Nakamura Y."/>
            <person name="Nagahari K."/>
            <person name="Murakami K."/>
            <person name="Yasuda T."/>
            <person name="Iwayanagi T."/>
            <person name="Wagatsuma M."/>
            <person name="Shiratori A."/>
            <person name="Sudo H."/>
            <person name="Hosoiri T."/>
            <person name="Kaku Y."/>
            <person name="Kodaira H."/>
            <person name="Kondo H."/>
            <person name="Sugawara M."/>
            <person name="Takahashi M."/>
            <person name="Kanda K."/>
            <person name="Yokoi T."/>
            <person name="Furuya T."/>
            <person name="Kikkawa E."/>
            <person name="Omura Y."/>
            <person name="Abe K."/>
            <person name="Kamihara K."/>
            <person name="Katsuta N."/>
            <person name="Sato K."/>
            <person name="Tanikawa M."/>
            <person name="Yamazaki M."/>
            <person name="Ninomiya K."/>
            <person name="Ishibashi T."/>
            <person name="Yamashita H."/>
            <person name="Murakawa K."/>
            <person name="Fujimori K."/>
            <person name="Tanai H."/>
            <person name="Kimata M."/>
            <person name="Watanabe M."/>
            <person name="Hiraoka S."/>
            <person name="Chiba Y."/>
            <person name="Ishida S."/>
            <person name="Ono Y."/>
            <person name="Takiguchi S."/>
            <person name="Watanabe S."/>
            <person name="Yosida M."/>
            <person name="Hotuta T."/>
            <person name="Kusano J."/>
            <person name="Kanehori K."/>
            <person name="Takahashi-Fujii A."/>
            <person name="Hara H."/>
            <person name="Tanase T.-O."/>
            <person name="Nomura Y."/>
            <person name="Togiya S."/>
            <person name="Komai F."/>
            <person name="Hara R."/>
            <person name="Takeuchi K."/>
            <person name="Arita M."/>
            <person name="Imose N."/>
            <person name="Musashino K."/>
            <person name="Yuuki H."/>
            <person name="Oshima A."/>
            <person name="Sasaki N."/>
            <person name="Aotsuka S."/>
            <person name="Yoshikawa Y."/>
            <person name="Matsunawa H."/>
            <person name="Ichihara T."/>
            <person name="Shiohata N."/>
            <person name="Sano S."/>
            <person name="Moriya S."/>
            <person name="Momiyama H."/>
            <person name="Satoh N."/>
            <person name="Takami S."/>
            <person name="Terashima Y."/>
            <person name="Suzuki O."/>
            <person name="Nakagawa S."/>
            <person name="Senoh A."/>
            <person name="Mizoguchi H."/>
            <person name="Goto Y."/>
            <person name="Shimizu F."/>
            <person name="Wakebe H."/>
            <person name="Hishigaki H."/>
            <person name="Watanabe T."/>
            <person name="Sugiyama A."/>
            <person name="Takemoto M."/>
            <person name="Kawakami B."/>
            <person name="Yamazaki M."/>
            <person name="Watanabe K."/>
            <person name="Kumagai A."/>
            <person name="Itakura S."/>
            <person name="Fukuzumi Y."/>
            <person name="Fujimori Y."/>
            <person name="Komiyama M."/>
            <person name="Tashiro H."/>
            <person name="Tanigami A."/>
            <person name="Fujiwara T."/>
            <person name="Ono T."/>
            <person name="Yamada K."/>
            <person name="Fujii Y."/>
            <person name="Ozaki K."/>
            <person name="Hirao M."/>
            <person name="Ohmori Y."/>
            <person name="Kawabata A."/>
            <person name="Hikiji T."/>
            <person name="Kobatake N."/>
            <person name="Inagaki H."/>
            <person name="Ikema Y."/>
            <person name="Okamoto S."/>
            <person name="Okitani R."/>
            <person name="Kawakami T."/>
            <person name="Noguchi S."/>
            <person name="Itoh T."/>
            <person name="Shigeta K."/>
            <person name="Senba T."/>
            <person name="Matsumura K."/>
            <person name="Nakajima Y."/>
            <person name="Mizuno T."/>
            <person name="Morinaga M."/>
            <person name="Sasaki M."/>
            <person name="Togashi T."/>
            <person name="Oyama M."/>
            <person name="Hata H."/>
            <person name="Watanabe M."/>
            <person name="Komatsu T."/>
            <person name="Mizushima-Sugano J."/>
            <person name="Satoh T."/>
            <person name="Shirai Y."/>
            <person name="Takahashi Y."/>
            <person name="Nakagawa K."/>
            <person name="Okumura K."/>
            <person name="Nagase T."/>
            <person name="Nomura N."/>
            <person name="Kikuchi H."/>
            <person name="Masuho Y."/>
            <person name="Yamashita R."/>
            <person name="Nakai K."/>
            <person name="Yada T."/>
            <person name="Nakamura Y."/>
            <person name="Ohara O."/>
            <person name="Isogai T."/>
            <person name="Sugano S."/>
        </authorList>
    </citation>
    <scope>NUCLEOTIDE SEQUENCE [LARGE SCALE MRNA] (ISOFORMS 1 AND 2)</scope>
    <source>
        <tissue>Brain</tissue>
        <tissue>Tongue</tissue>
    </source>
</reference>
<reference key="4">
    <citation type="submission" date="2005-04" db="EMBL/GenBank/DDBJ databases">
        <authorList>
            <person name="Suzuki Y."/>
            <person name="Sugano S."/>
            <person name="Totoki Y."/>
            <person name="Toyoda A."/>
            <person name="Takeda T."/>
            <person name="Sakaki Y."/>
            <person name="Tanaka A."/>
            <person name="Yokoyama S."/>
        </authorList>
    </citation>
    <scope>NUCLEOTIDE SEQUENCE [LARGE SCALE MRNA] (ISOFORM 1)</scope>
</reference>
<reference key="5">
    <citation type="journal article" date="2005" name="Nature">
        <title>The DNA sequence of the human X chromosome.</title>
        <authorList>
            <person name="Ross M.T."/>
            <person name="Grafham D.V."/>
            <person name="Coffey A.J."/>
            <person name="Scherer S."/>
            <person name="McLay K."/>
            <person name="Muzny D."/>
            <person name="Platzer M."/>
            <person name="Howell G.R."/>
            <person name="Burrows C."/>
            <person name="Bird C.P."/>
            <person name="Frankish A."/>
            <person name="Lovell F.L."/>
            <person name="Howe K.L."/>
            <person name="Ashurst J.L."/>
            <person name="Fulton R.S."/>
            <person name="Sudbrak R."/>
            <person name="Wen G."/>
            <person name="Jones M.C."/>
            <person name="Hurles M.E."/>
            <person name="Andrews T.D."/>
            <person name="Scott C.E."/>
            <person name="Searle S."/>
            <person name="Ramser J."/>
            <person name="Whittaker A."/>
            <person name="Deadman R."/>
            <person name="Carter N.P."/>
            <person name="Hunt S.E."/>
            <person name="Chen R."/>
            <person name="Cree A."/>
            <person name="Gunaratne P."/>
            <person name="Havlak P."/>
            <person name="Hodgson A."/>
            <person name="Metzker M.L."/>
            <person name="Richards S."/>
            <person name="Scott G."/>
            <person name="Steffen D."/>
            <person name="Sodergren E."/>
            <person name="Wheeler D.A."/>
            <person name="Worley K.C."/>
            <person name="Ainscough R."/>
            <person name="Ambrose K.D."/>
            <person name="Ansari-Lari M.A."/>
            <person name="Aradhya S."/>
            <person name="Ashwell R.I."/>
            <person name="Babbage A.K."/>
            <person name="Bagguley C.L."/>
            <person name="Ballabio A."/>
            <person name="Banerjee R."/>
            <person name="Barker G.E."/>
            <person name="Barlow K.F."/>
            <person name="Barrett I.P."/>
            <person name="Bates K.N."/>
            <person name="Beare D.M."/>
            <person name="Beasley H."/>
            <person name="Beasley O."/>
            <person name="Beck A."/>
            <person name="Bethel G."/>
            <person name="Blechschmidt K."/>
            <person name="Brady N."/>
            <person name="Bray-Allen S."/>
            <person name="Bridgeman A.M."/>
            <person name="Brown A.J."/>
            <person name="Brown M.J."/>
            <person name="Bonnin D."/>
            <person name="Bruford E.A."/>
            <person name="Buhay C."/>
            <person name="Burch P."/>
            <person name="Burford D."/>
            <person name="Burgess J."/>
            <person name="Burrill W."/>
            <person name="Burton J."/>
            <person name="Bye J.M."/>
            <person name="Carder C."/>
            <person name="Carrel L."/>
            <person name="Chako J."/>
            <person name="Chapman J.C."/>
            <person name="Chavez D."/>
            <person name="Chen E."/>
            <person name="Chen G."/>
            <person name="Chen Y."/>
            <person name="Chen Z."/>
            <person name="Chinault C."/>
            <person name="Ciccodicola A."/>
            <person name="Clark S.Y."/>
            <person name="Clarke G."/>
            <person name="Clee C.M."/>
            <person name="Clegg S."/>
            <person name="Clerc-Blankenburg K."/>
            <person name="Clifford K."/>
            <person name="Cobley V."/>
            <person name="Cole C.G."/>
            <person name="Conquer J.S."/>
            <person name="Corby N."/>
            <person name="Connor R.E."/>
            <person name="David R."/>
            <person name="Davies J."/>
            <person name="Davis C."/>
            <person name="Davis J."/>
            <person name="Delgado O."/>
            <person name="Deshazo D."/>
            <person name="Dhami P."/>
            <person name="Ding Y."/>
            <person name="Dinh H."/>
            <person name="Dodsworth S."/>
            <person name="Draper H."/>
            <person name="Dugan-Rocha S."/>
            <person name="Dunham A."/>
            <person name="Dunn M."/>
            <person name="Durbin K.J."/>
            <person name="Dutta I."/>
            <person name="Eades T."/>
            <person name="Ellwood M."/>
            <person name="Emery-Cohen A."/>
            <person name="Errington H."/>
            <person name="Evans K.L."/>
            <person name="Faulkner L."/>
            <person name="Francis F."/>
            <person name="Frankland J."/>
            <person name="Fraser A.E."/>
            <person name="Galgoczy P."/>
            <person name="Gilbert J."/>
            <person name="Gill R."/>
            <person name="Gloeckner G."/>
            <person name="Gregory S.G."/>
            <person name="Gribble S."/>
            <person name="Griffiths C."/>
            <person name="Grocock R."/>
            <person name="Gu Y."/>
            <person name="Gwilliam R."/>
            <person name="Hamilton C."/>
            <person name="Hart E.A."/>
            <person name="Hawes A."/>
            <person name="Heath P.D."/>
            <person name="Heitmann K."/>
            <person name="Hennig S."/>
            <person name="Hernandez J."/>
            <person name="Hinzmann B."/>
            <person name="Ho S."/>
            <person name="Hoffs M."/>
            <person name="Howden P.J."/>
            <person name="Huckle E.J."/>
            <person name="Hume J."/>
            <person name="Hunt P.J."/>
            <person name="Hunt A.R."/>
            <person name="Isherwood J."/>
            <person name="Jacob L."/>
            <person name="Johnson D."/>
            <person name="Jones S."/>
            <person name="de Jong P.J."/>
            <person name="Joseph S.S."/>
            <person name="Keenan S."/>
            <person name="Kelly S."/>
            <person name="Kershaw J.K."/>
            <person name="Khan Z."/>
            <person name="Kioschis P."/>
            <person name="Klages S."/>
            <person name="Knights A.J."/>
            <person name="Kosiura A."/>
            <person name="Kovar-Smith C."/>
            <person name="Laird G.K."/>
            <person name="Langford C."/>
            <person name="Lawlor S."/>
            <person name="Leversha M."/>
            <person name="Lewis L."/>
            <person name="Liu W."/>
            <person name="Lloyd C."/>
            <person name="Lloyd D.M."/>
            <person name="Loulseged H."/>
            <person name="Loveland J.E."/>
            <person name="Lovell J.D."/>
            <person name="Lozado R."/>
            <person name="Lu J."/>
            <person name="Lyne R."/>
            <person name="Ma J."/>
            <person name="Maheshwari M."/>
            <person name="Matthews L.H."/>
            <person name="McDowall J."/>
            <person name="McLaren S."/>
            <person name="McMurray A."/>
            <person name="Meidl P."/>
            <person name="Meitinger T."/>
            <person name="Milne S."/>
            <person name="Miner G."/>
            <person name="Mistry S.L."/>
            <person name="Morgan M."/>
            <person name="Morris S."/>
            <person name="Mueller I."/>
            <person name="Mullikin J.C."/>
            <person name="Nguyen N."/>
            <person name="Nordsiek G."/>
            <person name="Nyakatura G."/>
            <person name="O'dell C.N."/>
            <person name="Okwuonu G."/>
            <person name="Palmer S."/>
            <person name="Pandian R."/>
            <person name="Parker D."/>
            <person name="Parrish J."/>
            <person name="Pasternak S."/>
            <person name="Patel D."/>
            <person name="Pearce A.V."/>
            <person name="Pearson D.M."/>
            <person name="Pelan S.E."/>
            <person name="Perez L."/>
            <person name="Porter K.M."/>
            <person name="Ramsey Y."/>
            <person name="Reichwald K."/>
            <person name="Rhodes S."/>
            <person name="Ridler K.A."/>
            <person name="Schlessinger D."/>
            <person name="Schueler M.G."/>
            <person name="Sehra H.K."/>
            <person name="Shaw-Smith C."/>
            <person name="Shen H."/>
            <person name="Sheridan E.M."/>
            <person name="Shownkeen R."/>
            <person name="Skuce C.D."/>
            <person name="Smith M.L."/>
            <person name="Sotheran E.C."/>
            <person name="Steingruber H.E."/>
            <person name="Steward C.A."/>
            <person name="Storey R."/>
            <person name="Swann R.M."/>
            <person name="Swarbreck D."/>
            <person name="Tabor P.E."/>
            <person name="Taudien S."/>
            <person name="Taylor T."/>
            <person name="Teague B."/>
            <person name="Thomas K."/>
            <person name="Thorpe A."/>
            <person name="Timms K."/>
            <person name="Tracey A."/>
            <person name="Trevanion S."/>
            <person name="Tromans A.C."/>
            <person name="d'Urso M."/>
            <person name="Verduzco D."/>
            <person name="Villasana D."/>
            <person name="Waldron L."/>
            <person name="Wall M."/>
            <person name="Wang Q."/>
            <person name="Warren J."/>
            <person name="Warry G.L."/>
            <person name="Wei X."/>
            <person name="West A."/>
            <person name="Whitehead S.L."/>
            <person name="Whiteley M.N."/>
            <person name="Wilkinson J.E."/>
            <person name="Willey D.L."/>
            <person name="Williams G."/>
            <person name="Williams L."/>
            <person name="Williamson A."/>
            <person name="Williamson H."/>
            <person name="Wilming L."/>
            <person name="Woodmansey R.L."/>
            <person name="Wray P.W."/>
            <person name="Yen J."/>
            <person name="Zhang J."/>
            <person name="Zhou J."/>
            <person name="Zoghbi H."/>
            <person name="Zorilla S."/>
            <person name="Buck D."/>
            <person name="Reinhardt R."/>
            <person name="Poustka A."/>
            <person name="Rosenthal A."/>
            <person name="Lehrach H."/>
            <person name="Meindl A."/>
            <person name="Minx P.J."/>
            <person name="Hillier L.W."/>
            <person name="Willard H.F."/>
            <person name="Wilson R.K."/>
            <person name="Waterston R.H."/>
            <person name="Rice C.M."/>
            <person name="Vaudin M."/>
            <person name="Coulson A."/>
            <person name="Nelson D.L."/>
            <person name="Weinstock G."/>
            <person name="Sulston J.E."/>
            <person name="Durbin R.M."/>
            <person name="Hubbard T."/>
            <person name="Gibbs R.A."/>
            <person name="Beck S."/>
            <person name="Rogers J."/>
            <person name="Bentley D.R."/>
        </authorList>
    </citation>
    <scope>NUCLEOTIDE SEQUENCE [LARGE SCALE GENOMIC DNA]</scope>
</reference>
<reference key="6">
    <citation type="submission" date="2005-07" db="EMBL/GenBank/DDBJ databases">
        <authorList>
            <person name="Mural R.J."/>
            <person name="Istrail S."/>
            <person name="Sutton G.G."/>
            <person name="Florea L."/>
            <person name="Halpern A.L."/>
            <person name="Mobarry C.M."/>
            <person name="Lippert R."/>
            <person name="Walenz B."/>
            <person name="Shatkay H."/>
            <person name="Dew I."/>
            <person name="Miller J.R."/>
            <person name="Flanigan M.J."/>
            <person name="Edwards N.J."/>
            <person name="Bolanos R."/>
            <person name="Fasulo D."/>
            <person name="Halldorsson B.V."/>
            <person name="Hannenhalli S."/>
            <person name="Turner R."/>
            <person name="Yooseph S."/>
            <person name="Lu F."/>
            <person name="Nusskern D.R."/>
            <person name="Shue B.C."/>
            <person name="Zheng X.H."/>
            <person name="Zhong F."/>
            <person name="Delcher A.L."/>
            <person name="Huson D.H."/>
            <person name="Kravitz S.A."/>
            <person name="Mouchard L."/>
            <person name="Reinert K."/>
            <person name="Remington K.A."/>
            <person name="Clark A.G."/>
            <person name="Waterman M.S."/>
            <person name="Eichler E.E."/>
            <person name="Adams M.D."/>
            <person name="Hunkapiller M.W."/>
            <person name="Myers E.W."/>
            <person name="Venter J.C."/>
        </authorList>
    </citation>
    <scope>NUCLEOTIDE SEQUENCE [LARGE SCALE GENOMIC DNA]</scope>
</reference>
<reference key="7">
    <citation type="journal article" date="2004" name="Genome Res.">
        <title>The status, quality, and expansion of the NIH full-length cDNA project: the Mammalian Gene Collection (MGC).</title>
        <authorList>
            <consortium name="The MGC Project Team"/>
        </authorList>
    </citation>
    <scope>NUCLEOTIDE SEQUENCE [LARGE SCALE MRNA] (ISOFORM 1)</scope>
    <source>
        <tissue>Lung</tissue>
    </source>
</reference>
<reference key="8">
    <citation type="journal article" date="2000" name="J. Cell Sci.">
        <title>Mitotic phosphorylation of SUV39H1, a novel component of active centromeres, coincides with transient accumulation at mammalian centromeres.</title>
        <authorList>
            <person name="Aagaard L."/>
            <person name="Schmid M."/>
            <person name="Warburton P."/>
            <person name="Jenuwein T."/>
        </authorList>
    </citation>
    <scope>SUBCELLULAR LOCATION</scope>
    <scope>PHOSPHORYLATION</scope>
</reference>
<reference key="9">
    <citation type="journal article" date="2000" name="Nature">
        <title>Regulation of chromatin structure by site-specific histone H3 methyltransferases.</title>
        <authorList>
            <person name="Rea S."/>
            <person name="Eisenhaber F."/>
            <person name="O'Carroll D."/>
            <person name="Strahl B.D."/>
            <person name="Sun Z.-W."/>
            <person name="Schmid M."/>
            <person name="Opravil S."/>
            <person name="Mechtler K."/>
            <person name="Ponting C.P."/>
            <person name="Allis C.D."/>
            <person name="Jenuwein T."/>
        </authorList>
    </citation>
    <scope>CATALYTIC ACTIVITY</scope>
    <scope>MUTAGENESIS OF HIS-320; HIS-324 AND CYS-326</scope>
</reference>
<reference key="10">
    <citation type="journal article" date="2000" name="Mol. Cell. Biol.">
        <title>Set domain-dependent regulation of transcriptional silencing and growth control by SUV39H1, a mammalian ortholog of Drosophila Su(var)3-9.</title>
        <authorList>
            <person name="Firestein R."/>
            <person name="Cui X."/>
            <person name="Huie P."/>
            <person name="Cleary M.L."/>
        </authorList>
    </citation>
    <scope>INTERACTION WITH SBF1</scope>
</reference>
<reference key="11">
    <citation type="journal article" date="2001" name="Nature">
        <title>Methylation of histone H3 lysine 9 creates a binding site for HP1 proteins.</title>
        <authorList>
            <person name="Lachner M."/>
            <person name="O'Carroll D."/>
            <person name="Rea S."/>
            <person name="Mechtler K."/>
            <person name="Jenuwein T."/>
        </authorList>
    </citation>
    <scope>INTERACTION WITH HISTONE H3 AND HISTONE H4</scope>
</reference>
<reference key="12">
    <citation type="journal article" date="2001" name="Nature">
        <title>Rb targets histone H3 methylation and HP1 to promoters.</title>
        <authorList>
            <person name="Nielsen S.J."/>
            <person name="Schneider R."/>
            <person name="Bauer U.-M."/>
            <person name="Bannister A.J."/>
            <person name="Morrison A."/>
            <person name="O'Carroll D."/>
            <person name="Firestein R."/>
            <person name="Cleary M.L."/>
            <person name="Jenuwein T."/>
            <person name="Herrera R.E."/>
            <person name="Kouzarides T."/>
        </authorList>
    </citation>
    <scope>INTERACTION WITH RB1</scope>
</reference>
<reference key="13">
    <citation type="journal article" date="2003" name="J. Biol. Chem.">
        <title>Methyl-CpG binding domain 1 (MBD1) interacts with the Suv39h1-HP1 heterochromatic complex for DNA methylation-based transcriptional repression.</title>
        <authorList>
            <person name="Fujita N."/>
            <person name="Watanabe S."/>
            <person name="Ichimura T."/>
            <person name="Tsuruzoe S."/>
            <person name="Shinkai Y."/>
            <person name="Tachibana M."/>
            <person name="Chiba T."/>
            <person name="Nakao M."/>
        </authorList>
    </citation>
    <scope>INTERACTION WITH MBD1</scope>
</reference>
<reference key="14">
    <citation type="journal article" date="2002" name="Mol. Cell. Biol.">
        <title>Selective interactions between vertebrate polycomb homologs and the SUV39H1 histone lysine methyltransferase suggest that histone H3-K9 methylation contributes to chromosomal targeting of Polycomb group proteins.</title>
        <authorList>
            <person name="Sewalt R.G.A.B."/>
            <person name="Lachner M."/>
            <person name="Vargas M."/>
            <person name="Hamer K.M."/>
            <person name="den Blaauwen J.L."/>
            <person name="Hendrix T."/>
            <person name="Melcher M."/>
            <person name="Schweizer D."/>
            <person name="Jenuwein T."/>
            <person name="Otte A.P."/>
        </authorList>
    </citation>
    <scope>INTERACTION WITH CBX4</scope>
</reference>
<reference key="15">
    <citation type="journal article" date="2003" name="Oncogene">
        <title>SUV39H1 interacts with AML1 and abrogates AML1 transactivity. AML1 is methylated in vivo.</title>
        <authorList>
            <person name="Chakraborty S."/>
            <person name="Sinha K.K."/>
            <person name="Senyuk V."/>
            <person name="Nucifora G."/>
        </authorList>
    </citation>
    <scope>INTERACTION WITH RUNX1</scope>
</reference>
<reference key="16">
    <citation type="journal article" date="2003" name="Oncogene">
        <title>pRb2/p130-E2F4/5-HDAC1-SUV39H1-p300 and pRb2/p130-E2F4/5-HDAC1-SUV39H1-DNMT1 multimolecular complexes mediate the transcription of estrogen receptor-alpha in breast cancer.</title>
        <authorList>
            <person name="Macaluso M."/>
            <person name="Cinti C."/>
            <person name="Russo G."/>
            <person name="Russo A."/>
            <person name="Giordano A."/>
        </authorList>
    </citation>
    <scope>IDENTIFICATION IN A COMPLEX WITH HDAC1</scope>
</reference>
<reference key="17">
    <citation type="journal article" date="2004" name="EMBO J.">
        <title>A Suv39h-dependent mechanism for silencing S-phase genes in differentiating but not in cycling cells.</title>
        <authorList>
            <person name="Ait-Si-Ali S."/>
            <person name="Guasconi V."/>
            <person name="Fritsch L."/>
            <person name="Yahi H."/>
            <person name="Sekhri R."/>
            <person name="Naguibneva I."/>
            <person name="Robin P."/>
            <person name="Cabon F."/>
            <person name="Polesskaya A."/>
            <person name="Harel-Bellan A."/>
        </authorList>
    </citation>
    <scope>FUNCTION</scope>
</reference>
<reference key="18">
    <citation type="journal article" date="2004" name="Oncogene">
        <title>Suv39h histone methyltransferases interact with Smads and cooperate in BMP-induced repression.</title>
        <authorList>
            <person name="Frontelo P."/>
            <person name="Leader J.E."/>
            <person name="Yoo N."/>
            <person name="Potocki A.C."/>
            <person name="Crawford M."/>
            <person name="Kulik M."/>
            <person name="Lechleider R.J."/>
        </authorList>
    </citation>
    <scope>INTERACTION WITH SMAD5</scope>
</reference>
<reference key="19">
    <citation type="journal article" date="2005" name="J. Cell Biol.">
        <title>A glue for heterochromatin maintenance: stable SUV39H1 binding to heterochromatin is reinforced by the SET domain.</title>
        <authorList>
            <person name="Krouwels I.M."/>
            <person name="Wiesmeijer K."/>
            <person name="Abraham T.E."/>
            <person name="Molenaar C."/>
            <person name="Verwoerd N.P."/>
            <person name="Tanke H.J."/>
            <person name="Dirks R.W."/>
        </authorList>
    </citation>
    <scope>DOMAIN</scope>
    <scope>INTERACTION WITH CBX1</scope>
</reference>
<reference key="20">
    <citation type="journal article" date="2006" name="Cell">
        <title>Global, in vivo, and site-specific phosphorylation dynamics in signaling networks.</title>
        <authorList>
            <person name="Olsen J.V."/>
            <person name="Blagoev B."/>
            <person name="Gnad F."/>
            <person name="Macek B."/>
            <person name="Kumar C."/>
            <person name="Mortensen P."/>
            <person name="Mann M."/>
        </authorList>
    </citation>
    <scope>PHOSPHORYLATION [LARGE SCALE ANALYSIS] AT SER-391</scope>
    <scope>IDENTIFICATION BY MASS SPECTROMETRY [LARGE SCALE ANALYSIS]</scope>
    <source>
        <tissue>Cervix carcinoma</tissue>
    </source>
</reference>
<reference key="21">
    <citation type="journal article" date="2006" name="EMBO J.">
        <title>Gfi1b alters histone methylation at target gene promoters and sites of gamma-satellite containing heterochromatin.</title>
        <authorList>
            <person name="Vassen L."/>
            <person name="Fiolka K."/>
            <person name="Moeroey T."/>
        </authorList>
    </citation>
    <scope>INTERACTION WITH GFI1B</scope>
</reference>
<reference key="22">
    <citation type="journal article" date="2006" name="J. Immunol.">
        <title>The histone methyltransferase Suv39h1 increases class switch recombination specifically to IgA.</title>
        <authorList>
            <person name="Bradley S.P."/>
            <person name="Kaminski D.A."/>
            <person name="Peters A.H.F.M."/>
            <person name="Jenuwein T."/>
            <person name="Stavnezer J."/>
        </authorList>
    </citation>
    <scope>FUNCTION</scope>
</reference>
<reference key="23">
    <citation type="journal article" date="2006" name="Biochemistry">
        <title>Catalytic properties and kinetic mechanism of human recombinant Lys-9 histone H3 methyltransferase SUV39H1: participation of the chromodomain in enzymatic catalysis.</title>
        <authorList>
            <person name="Chin H.G."/>
            <person name="Patnaik D."/>
            <person name="Esteve P.-O."/>
            <person name="Jacobsen S.E."/>
            <person name="Pradhan S."/>
        </authorList>
    </citation>
    <scope>ACTIVITY REGULATION</scope>
    <scope>MUTAGENESIS OF TRP-64 AND TYR-67</scope>
</reference>
<reference key="24">
    <citation type="journal article" date="2006" name="EMBO J.">
        <title>Histone methyltransferase Suv39h1 represses MyoD-stimulated myogenic differentiation.</title>
        <authorList>
            <person name="Mal A.K."/>
        </authorList>
    </citation>
    <scope>FUNCTION</scope>
    <scope>INTERACTION WITH MYOD1</scope>
</reference>
<reference key="25">
    <citation type="journal article" date="2006" name="Mol. Cell. Biol.">
        <title>Recruitment of the histone methyltransferase SUV39H1 and its role in the oncogenic properties of the leukemia-associated PML-retinoic acid receptor fusion protein.</title>
        <authorList>
            <person name="Carbone R."/>
            <person name="Botrugno O.A."/>
            <person name="Ronzoni S."/>
            <person name="Insinga A."/>
            <person name="Di Croce L."/>
            <person name="Pelicci P.G."/>
            <person name="Minucci S."/>
        </authorList>
    </citation>
    <scope>FUNCTION</scope>
</reference>
<reference key="26">
    <citation type="journal article" date="2006" name="Oncogene">
        <title>RUNX1 associates with histone deacetylases and SUV39H1 to repress transcription.</title>
        <authorList>
            <person name="Reed-Inderbitzin E."/>
            <person name="Moreno-Miralles I."/>
            <person name="Vanden-Eynden S.K."/>
            <person name="Xie J."/>
            <person name="Lutterbach B."/>
            <person name="Durst-Goodwin K.L."/>
            <person name="Luce K.S."/>
            <person name="Irvin B.J."/>
            <person name="Cleary M.L."/>
            <person name="Brandt S.J."/>
            <person name="Hiebert S.W."/>
        </authorList>
    </citation>
    <scope>INTERACTION WITH RUNX1 AND RUNX3</scope>
</reference>
<reference key="27">
    <citation type="journal article" date="2006" name="Retrovirology">
        <title>SUV39H1 interacts with HTLV-1 Tax and abrogates Tax transactivation of HTLV-1 LTR.</title>
        <authorList>
            <person name="Kamoi K."/>
            <person name="Yamamoto K."/>
            <person name="Misawa A."/>
            <person name="Miyake A."/>
            <person name="Ishida T."/>
            <person name="Tanaka Y."/>
            <person name="Mochizuki M."/>
            <person name="Watanabe T."/>
        </authorList>
    </citation>
    <scope>INTERACTION WITH HTLV-1 TAX (MICROBIAL INFECTION)</scope>
</reference>
<reference key="28">
    <citation type="journal article" date="2007" name="Nature">
        <title>SIRT1 regulates the histone methyl-transferase SUV39H1 during heterochromatin formation.</title>
        <authorList>
            <person name="Vaquero A."/>
            <person name="Scher M."/>
            <person name="Erdjument-Bromage H."/>
            <person name="Tempst P."/>
            <person name="Serrano L."/>
            <person name="Reinberg D."/>
        </authorList>
    </citation>
    <scope>FUNCTION</scope>
    <scope>CATALYTIC ACTIVITY</scope>
    <scope>ACETYLATION AT LYS-266</scope>
    <scope>MUTAGENESIS OF LYS-266</scope>
    <scope>SUBCELLULAR LOCATION</scope>
</reference>
<reference key="29">
    <citation type="journal article" date="2008" name="Cell">
        <title>Epigenetic control of rDNA loci in response to intracellular energy status.</title>
        <authorList>
            <person name="Murayama A."/>
            <person name="Ohmori K."/>
            <person name="Fujimura A."/>
            <person name="Minami H."/>
            <person name="Yasuzawa-Tanaka K."/>
            <person name="Kuroda T."/>
            <person name="Oie S."/>
            <person name="Daitoku H."/>
            <person name="Okuwaki M."/>
            <person name="Nagata K."/>
            <person name="Fukamizu A."/>
            <person name="Kimura K."/>
            <person name="Shimizu T."/>
            <person name="Yanagisawa J."/>
        </authorList>
    </citation>
    <scope>IDENTIFICATION IN THE ENOSC COMPLEX</scope>
    <scope>FUNCTION</scope>
</reference>
<reference key="30">
    <citation type="journal article" date="2008" name="Proc. Natl. Acad. Sci. U.S.A.">
        <title>A quantitative atlas of mitotic phosphorylation.</title>
        <authorList>
            <person name="Dephoure N."/>
            <person name="Zhou C."/>
            <person name="Villen J."/>
            <person name="Beausoleil S.A."/>
            <person name="Bakalarski C.E."/>
            <person name="Elledge S.J."/>
            <person name="Gygi S.P."/>
        </authorList>
    </citation>
    <scope>PHOSPHORYLATION [LARGE SCALE ANALYSIS] AT SER-391</scope>
    <scope>IDENTIFICATION BY MASS SPECTROMETRY [LARGE SCALE ANALYSIS]</scope>
    <source>
        <tissue>Cervix carcinoma</tissue>
    </source>
</reference>
<reference key="31">
    <citation type="journal article" date="2009" name="J. Biol. Chem.">
        <title>Inhibition of SUV39H1 methyltransferase activity by DBC1.</title>
        <authorList>
            <person name="Li Z."/>
            <person name="Chen L."/>
            <person name="Kabra N."/>
            <person name="Wang C."/>
            <person name="Fang J."/>
            <person name="Chen J."/>
        </authorList>
    </citation>
    <scope>INTERACTION WITH CCAR2</scope>
    <scope>ACTIVITY REGULATION</scope>
</reference>
<reference key="32">
    <citation type="journal article" date="2009" name="Sci. Signal.">
        <title>Quantitative phosphoproteomic analysis of T cell receptor signaling reveals system-wide modulation of protein-protein interactions.</title>
        <authorList>
            <person name="Mayya V."/>
            <person name="Lundgren D.H."/>
            <person name="Hwang S.-I."/>
            <person name="Rezaul K."/>
            <person name="Wu L."/>
            <person name="Eng J.K."/>
            <person name="Rodionov V."/>
            <person name="Han D.K."/>
        </authorList>
    </citation>
    <scope>PHOSPHORYLATION [LARGE SCALE ANALYSIS] AT SER-391</scope>
    <scope>IDENTIFICATION BY MASS SPECTROMETRY [LARGE SCALE ANALYSIS]</scope>
    <source>
        <tissue>Leukemic T-cell</tissue>
    </source>
</reference>
<reference key="33">
    <citation type="journal article" date="2010" name="Sci. Signal.">
        <title>Quantitative phosphoproteomics reveals widespread full phosphorylation site occupancy during mitosis.</title>
        <authorList>
            <person name="Olsen J.V."/>
            <person name="Vermeulen M."/>
            <person name="Santamaria A."/>
            <person name="Kumar C."/>
            <person name="Miller M.L."/>
            <person name="Jensen L.J."/>
            <person name="Gnad F."/>
            <person name="Cox J."/>
            <person name="Jensen T.S."/>
            <person name="Nigg E.A."/>
            <person name="Brunak S."/>
            <person name="Mann M."/>
        </authorList>
    </citation>
    <scope>PHOSPHORYLATION [LARGE SCALE ANALYSIS] AT SER-391</scope>
    <scope>IDENTIFICATION BY MASS SPECTROMETRY [LARGE SCALE ANALYSIS]</scope>
    <source>
        <tissue>Cervix carcinoma</tissue>
    </source>
</reference>
<reference key="34">
    <citation type="journal article" date="2011" name="Sci. Signal.">
        <title>System-wide temporal characterization of the proteome and phosphoproteome of human embryonic stem cell differentiation.</title>
        <authorList>
            <person name="Rigbolt K.T."/>
            <person name="Prokhorova T.A."/>
            <person name="Akimov V."/>
            <person name="Henningsen J."/>
            <person name="Johansen P.T."/>
            <person name="Kratchmarova I."/>
            <person name="Kassem M."/>
            <person name="Mann M."/>
            <person name="Olsen J.V."/>
            <person name="Blagoev B."/>
        </authorList>
    </citation>
    <scope>PHOSPHORYLATION [LARGE SCALE ANALYSIS] AT SER-391</scope>
    <scope>IDENTIFICATION BY MASS SPECTROMETRY [LARGE SCALE ANALYSIS]</scope>
</reference>
<reference key="35">
    <citation type="journal article" date="2013" name="J. Proteome Res.">
        <title>Toward a comprehensive characterization of a human cancer cell phosphoproteome.</title>
        <authorList>
            <person name="Zhou H."/>
            <person name="Di Palma S."/>
            <person name="Preisinger C."/>
            <person name="Peng M."/>
            <person name="Polat A.N."/>
            <person name="Heck A.J."/>
            <person name="Mohammed S."/>
        </authorList>
    </citation>
    <scope>PHOSPHORYLATION [LARGE SCALE ANALYSIS] AT SER-391</scope>
    <scope>IDENTIFICATION BY MASS SPECTROMETRY [LARGE SCALE ANALYSIS]</scope>
    <source>
        <tissue>Cervix carcinoma</tissue>
        <tissue>Erythroleukemia</tissue>
    </source>
</reference>
<reference key="36">
    <citation type="journal article" date="2013" name="Nat. Commun.">
        <title>Depleting the methyltransferase Suv39h1 improves DNA repair and extends lifespan in a progeria mouse model.</title>
        <authorList>
            <person name="Liu B."/>
            <person name="Wang Z."/>
            <person name="Zhang L."/>
            <person name="Ghosh S."/>
            <person name="Zheng H."/>
            <person name="Zhou Z."/>
        </authorList>
    </citation>
    <scope>INTERACTION WITH LMNA</scope>
    <scope>SUBCELLULAR LOCATION</scope>
</reference>
<reference key="37">
    <citation type="journal article" date="2018" name="EMBO J.">
        <title>Histone methyltransferase SUV39H1 participates in host defense by methylating mycobacterial histone-like protein HupB.</title>
        <authorList>
            <person name="Yaseen I."/>
            <person name="Choudhury M."/>
            <person name="Sritharan M."/>
            <person name="Khosla S."/>
        </authorList>
    </citation>
    <scope>FUNCTION (MICROBIAL INFECTION)</scope>
    <scope>SUBCELLULAR LOCATION</scope>
    <scope>SUBCELLULAR LOCATION (MICROBIAL INFECTION)</scope>
    <scope>INDUCTION BY MYCOBACTERIA (MICROBIAL INFECTION)</scope>
    <scope>PTM (MICROBIAL INFECTION)</scope>
    <source>
        <tissue>Macrophage</tissue>
    </source>
</reference>
<reference key="38">
    <citation type="journal article" date="2018" name="EMBO J.">
        <title>DCAF13 promotes pluripotency by negatively regulating SUV39H1 stability during early embryonic development.</title>
        <authorList>
            <person name="Zhang Y.L."/>
            <person name="Zhao L.W."/>
            <person name="Zhang J."/>
            <person name="Le R."/>
            <person name="Ji S.Y."/>
            <person name="Chen C."/>
            <person name="Gao Y."/>
            <person name="Li D."/>
            <person name="Gao S."/>
            <person name="Fan H.Y."/>
        </authorList>
    </citation>
    <scope>FUNCTION</scope>
    <scope>SUBCELLULAR LOCATION</scope>
    <scope>UBIQUITINATION</scope>
</reference>
<proteinExistence type="evidence at protein level"/>